<keyword id="KW-0002">3D-structure</keyword>
<keyword id="KW-0007">Acetylation</keyword>
<keyword id="KW-0025">Alternative splicing</keyword>
<keyword id="KW-1269">Autism</keyword>
<keyword id="KW-1268">Autism spectrum disorder</keyword>
<keyword id="KW-0160">Chromosomal rearrangement</keyword>
<keyword id="KW-0225">Disease variant</keyword>
<keyword id="KW-0238">DNA-binding</keyword>
<keyword id="KW-0991">Intellectual disability</keyword>
<keyword id="KW-0488">Methylation</keyword>
<keyword id="KW-0539">Nucleus</keyword>
<keyword id="KW-0597">Phosphoprotein</keyword>
<keyword id="KW-1267">Proteomics identification</keyword>
<keyword id="KW-1185">Reference proteome</keyword>
<keyword id="KW-0677">Repeat</keyword>
<keyword id="KW-0678">Repressor</keyword>
<keyword id="KW-0804">Transcription</keyword>
<keyword id="KW-0805">Transcription regulation</keyword>
<organism>
    <name type="scientific">Homo sapiens</name>
    <name type="common">Human</name>
    <dbReference type="NCBI Taxonomy" id="9606"/>
    <lineage>
        <taxon>Eukaryota</taxon>
        <taxon>Metazoa</taxon>
        <taxon>Chordata</taxon>
        <taxon>Craniata</taxon>
        <taxon>Vertebrata</taxon>
        <taxon>Euteleostomi</taxon>
        <taxon>Mammalia</taxon>
        <taxon>Eutheria</taxon>
        <taxon>Euarchontoglires</taxon>
        <taxon>Primates</taxon>
        <taxon>Haplorrhini</taxon>
        <taxon>Catarrhini</taxon>
        <taxon>Hominidae</taxon>
        <taxon>Homo</taxon>
    </lineage>
</organism>
<accession>P51608</accession>
<accession>O15233</accession>
<accession>Q6QHH9</accession>
<accession>Q7Z384</accession>
<proteinExistence type="evidence at protein level"/>
<reference key="1">
    <citation type="journal article" date="1998" name="Mol. Cell. Biol.">
        <title>Methyl-CpG-binding protein MeCP2 represses Sp1-activated transcription of the human leukosialin gene when the promoter is methylated.</title>
        <authorList>
            <person name="Kudo S."/>
        </authorList>
    </citation>
    <scope>NUCLEOTIDE SEQUENCE [MRNA] (ISOFORM A)</scope>
</reference>
<reference key="2">
    <citation type="journal article" date="1996" name="Cytogenet. Cell Genet.">
        <title>Assignment of the gene for methyl-CpG-binding protein 2 (MECP2) to human chromosome band Xq28 by in situ hybridization.</title>
        <authorList>
            <person name="Vilain A."/>
            <person name="Apiou F."/>
            <person name="Vogt N."/>
            <person name="Dutrillaux B."/>
            <person name="Malfoy B."/>
        </authorList>
    </citation>
    <scope>NUCLEOTIDE SEQUENCE [MRNA] (ISOFORM A)</scope>
</reference>
<reference key="3">
    <citation type="journal article" date="1999" name="Hum. Mol. Genet.">
        <title>A complex pattern of evolutionary conservation and alternative polyadenylation within the long 3'-untranslated region of the methyl-CpG-binding protein 2 gene (MeCP2) suggests a regulatory role in gene expression.</title>
        <authorList>
            <person name="Coy J.F."/>
            <person name="Sedlacek Z."/>
            <person name="Baechner D."/>
            <person name="Delius H."/>
            <person name="Poustka A."/>
        </authorList>
    </citation>
    <scope>NUCLEOTIDE SEQUENCE [MRNA] (ISOFORM A)</scope>
</reference>
<reference key="4">
    <citation type="journal article" date="2000" name="Mamm. Genome">
        <title>Comparative sequence analysis of the MECP2-locus in human and mouse reveals new transcribed regions.</title>
        <authorList>
            <person name="Reichwald K."/>
            <person name="Thiesen J."/>
            <person name="Wiehe T."/>
            <person name="Weitzel J."/>
            <person name="Poustka W.A."/>
            <person name="Rosenthal A."/>
            <person name="Platzer M."/>
            <person name="Stratling W.H."/>
            <person name="Kioschis P."/>
        </authorList>
    </citation>
    <scope>NUCLEOTIDE SEQUENCE [MRNA] (ISOFORM A)</scope>
</reference>
<reference key="5">
    <citation type="journal article" date="2004" name="Nat. Genet.">
        <title>A previously unidentified MECP2 open reading frame defines a new protein isoform relevant to Rett syndrome.</title>
        <authorList>
            <person name="Mnatzakanian G.N."/>
            <person name="Lohi H."/>
            <person name="Munteanu I."/>
            <person name="Alfred S.E."/>
            <person name="Yamada T."/>
            <person name="MacLeod P.J.M."/>
            <person name="Jones J.R."/>
            <person name="Scherer S.W."/>
            <person name="Schanen N.C."/>
            <person name="Friez M.J."/>
            <person name="Vincent J.B."/>
            <person name="Minassian B.A."/>
        </authorList>
    </citation>
    <scope>NUCLEOTIDE SEQUENCE [MRNA] (ISOFORM B)</scope>
    <scope>INVOLVEMENT IN RTT</scope>
</reference>
<reference key="6">
    <citation type="submission" date="1997-04" db="EMBL/GenBank/DDBJ databases">
        <authorList>
            <person name="Straetling W.H."/>
        </authorList>
    </citation>
    <scope>NUCLEOTIDE SEQUENCE [MRNA] (ISOFORM A)</scope>
    <source>
        <tissue>Placenta</tissue>
    </source>
</reference>
<reference key="7">
    <citation type="journal article" date="2007" name="BMC Genomics">
        <title>The full-ORF clone resource of the German cDNA consortium.</title>
        <authorList>
            <person name="Bechtel S."/>
            <person name="Rosenfelder H."/>
            <person name="Duda A."/>
            <person name="Schmidt C.P."/>
            <person name="Ernst U."/>
            <person name="Wellenreuther R."/>
            <person name="Mehrle A."/>
            <person name="Schuster C."/>
            <person name="Bahr A."/>
            <person name="Bloecker H."/>
            <person name="Heubner D."/>
            <person name="Hoerlein A."/>
            <person name="Michel G."/>
            <person name="Wedler H."/>
            <person name="Koehrer K."/>
            <person name="Ottenwaelder B."/>
            <person name="Poustka A."/>
            <person name="Wiemann S."/>
            <person name="Schupp I."/>
        </authorList>
    </citation>
    <scope>NUCLEOTIDE SEQUENCE [LARGE SCALE MRNA] (ISOFORM B)</scope>
    <source>
        <tissue>Colon endothelium</tissue>
    </source>
</reference>
<reference key="8">
    <citation type="journal article" date="2005" name="Nature">
        <title>The DNA sequence of the human X chromosome.</title>
        <authorList>
            <person name="Ross M.T."/>
            <person name="Grafham D.V."/>
            <person name="Coffey A.J."/>
            <person name="Scherer S."/>
            <person name="McLay K."/>
            <person name="Muzny D."/>
            <person name="Platzer M."/>
            <person name="Howell G.R."/>
            <person name="Burrows C."/>
            <person name="Bird C.P."/>
            <person name="Frankish A."/>
            <person name="Lovell F.L."/>
            <person name="Howe K.L."/>
            <person name="Ashurst J.L."/>
            <person name="Fulton R.S."/>
            <person name="Sudbrak R."/>
            <person name="Wen G."/>
            <person name="Jones M.C."/>
            <person name="Hurles M.E."/>
            <person name="Andrews T.D."/>
            <person name="Scott C.E."/>
            <person name="Searle S."/>
            <person name="Ramser J."/>
            <person name="Whittaker A."/>
            <person name="Deadman R."/>
            <person name="Carter N.P."/>
            <person name="Hunt S.E."/>
            <person name="Chen R."/>
            <person name="Cree A."/>
            <person name="Gunaratne P."/>
            <person name="Havlak P."/>
            <person name="Hodgson A."/>
            <person name="Metzker M.L."/>
            <person name="Richards S."/>
            <person name="Scott G."/>
            <person name="Steffen D."/>
            <person name="Sodergren E."/>
            <person name="Wheeler D.A."/>
            <person name="Worley K.C."/>
            <person name="Ainscough R."/>
            <person name="Ambrose K.D."/>
            <person name="Ansari-Lari M.A."/>
            <person name="Aradhya S."/>
            <person name="Ashwell R.I."/>
            <person name="Babbage A.K."/>
            <person name="Bagguley C.L."/>
            <person name="Ballabio A."/>
            <person name="Banerjee R."/>
            <person name="Barker G.E."/>
            <person name="Barlow K.F."/>
            <person name="Barrett I.P."/>
            <person name="Bates K.N."/>
            <person name="Beare D.M."/>
            <person name="Beasley H."/>
            <person name="Beasley O."/>
            <person name="Beck A."/>
            <person name="Bethel G."/>
            <person name="Blechschmidt K."/>
            <person name="Brady N."/>
            <person name="Bray-Allen S."/>
            <person name="Bridgeman A.M."/>
            <person name="Brown A.J."/>
            <person name="Brown M.J."/>
            <person name="Bonnin D."/>
            <person name="Bruford E.A."/>
            <person name="Buhay C."/>
            <person name="Burch P."/>
            <person name="Burford D."/>
            <person name="Burgess J."/>
            <person name="Burrill W."/>
            <person name="Burton J."/>
            <person name="Bye J.M."/>
            <person name="Carder C."/>
            <person name="Carrel L."/>
            <person name="Chako J."/>
            <person name="Chapman J.C."/>
            <person name="Chavez D."/>
            <person name="Chen E."/>
            <person name="Chen G."/>
            <person name="Chen Y."/>
            <person name="Chen Z."/>
            <person name="Chinault C."/>
            <person name="Ciccodicola A."/>
            <person name="Clark S.Y."/>
            <person name="Clarke G."/>
            <person name="Clee C.M."/>
            <person name="Clegg S."/>
            <person name="Clerc-Blankenburg K."/>
            <person name="Clifford K."/>
            <person name="Cobley V."/>
            <person name="Cole C.G."/>
            <person name="Conquer J.S."/>
            <person name="Corby N."/>
            <person name="Connor R.E."/>
            <person name="David R."/>
            <person name="Davies J."/>
            <person name="Davis C."/>
            <person name="Davis J."/>
            <person name="Delgado O."/>
            <person name="Deshazo D."/>
            <person name="Dhami P."/>
            <person name="Ding Y."/>
            <person name="Dinh H."/>
            <person name="Dodsworth S."/>
            <person name="Draper H."/>
            <person name="Dugan-Rocha S."/>
            <person name="Dunham A."/>
            <person name="Dunn M."/>
            <person name="Durbin K.J."/>
            <person name="Dutta I."/>
            <person name="Eades T."/>
            <person name="Ellwood M."/>
            <person name="Emery-Cohen A."/>
            <person name="Errington H."/>
            <person name="Evans K.L."/>
            <person name="Faulkner L."/>
            <person name="Francis F."/>
            <person name="Frankland J."/>
            <person name="Fraser A.E."/>
            <person name="Galgoczy P."/>
            <person name="Gilbert J."/>
            <person name="Gill R."/>
            <person name="Gloeckner G."/>
            <person name="Gregory S.G."/>
            <person name="Gribble S."/>
            <person name="Griffiths C."/>
            <person name="Grocock R."/>
            <person name="Gu Y."/>
            <person name="Gwilliam R."/>
            <person name="Hamilton C."/>
            <person name="Hart E.A."/>
            <person name="Hawes A."/>
            <person name="Heath P.D."/>
            <person name="Heitmann K."/>
            <person name="Hennig S."/>
            <person name="Hernandez J."/>
            <person name="Hinzmann B."/>
            <person name="Ho S."/>
            <person name="Hoffs M."/>
            <person name="Howden P.J."/>
            <person name="Huckle E.J."/>
            <person name="Hume J."/>
            <person name="Hunt P.J."/>
            <person name="Hunt A.R."/>
            <person name="Isherwood J."/>
            <person name="Jacob L."/>
            <person name="Johnson D."/>
            <person name="Jones S."/>
            <person name="de Jong P.J."/>
            <person name="Joseph S.S."/>
            <person name="Keenan S."/>
            <person name="Kelly S."/>
            <person name="Kershaw J.K."/>
            <person name="Khan Z."/>
            <person name="Kioschis P."/>
            <person name="Klages S."/>
            <person name="Knights A.J."/>
            <person name="Kosiura A."/>
            <person name="Kovar-Smith C."/>
            <person name="Laird G.K."/>
            <person name="Langford C."/>
            <person name="Lawlor S."/>
            <person name="Leversha M."/>
            <person name="Lewis L."/>
            <person name="Liu W."/>
            <person name="Lloyd C."/>
            <person name="Lloyd D.M."/>
            <person name="Loulseged H."/>
            <person name="Loveland J.E."/>
            <person name="Lovell J.D."/>
            <person name="Lozado R."/>
            <person name="Lu J."/>
            <person name="Lyne R."/>
            <person name="Ma J."/>
            <person name="Maheshwari M."/>
            <person name="Matthews L.H."/>
            <person name="McDowall J."/>
            <person name="McLaren S."/>
            <person name="McMurray A."/>
            <person name="Meidl P."/>
            <person name="Meitinger T."/>
            <person name="Milne S."/>
            <person name="Miner G."/>
            <person name="Mistry S.L."/>
            <person name="Morgan M."/>
            <person name="Morris S."/>
            <person name="Mueller I."/>
            <person name="Mullikin J.C."/>
            <person name="Nguyen N."/>
            <person name="Nordsiek G."/>
            <person name="Nyakatura G."/>
            <person name="O'dell C.N."/>
            <person name="Okwuonu G."/>
            <person name="Palmer S."/>
            <person name="Pandian R."/>
            <person name="Parker D."/>
            <person name="Parrish J."/>
            <person name="Pasternak S."/>
            <person name="Patel D."/>
            <person name="Pearce A.V."/>
            <person name="Pearson D.M."/>
            <person name="Pelan S.E."/>
            <person name="Perez L."/>
            <person name="Porter K.M."/>
            <person name="Ramsey Y."/>
            <person name="Reichwald K."/>
            <person name="Rhodes S."/>
            <person name="Ridler K.A."/>
            <person name="Schlessinger D."/>
            <person name="Schueler M.G."/>
            <person name="Sehra H.K."/>
            <person name="Shaw-Smith C."/>
            <person name="Shen H."/>
            <person name="Sheridan E.M."/>
            <person name="Shownkeen R."/>
            <person name="Skuce C.D."/>
            <person name="Smith M.L."/>
            <person name="Sotheran E.C."/>
            <person name="Steingruber H.E."/>
            <person name="Steward C.A."/>
            <person name="Storey R."/>
            <person name="Swann R.M."/>
            <person name="Swarbreck D."/>
            <person name="Tabor P.E."/>
            <person name="Taudien S."/>
            <person name="Taylor T."/>
            <person name="Teague B."/>
            <person name="Thomas K."/>
            <person name="Thorpe A."/>
            <person name="Timms K."/>
            <person name="Tracey A."/>
            <person name="Trevanion S."/>
            <person name="Tromans A.C."/>
            <person name="d'Urso M."/>
            <person name="Verduzco D."/>
            <person name="Villasana D."/>
            <person name="Waldron L."/>
            <person name="Wall M."/>
            <person name="Wang Q."/>
            <person name="Warren J."/>
            <person name="Warry G.L."/>
            <person name="Wei X."/>
            <person name="West A."/>
            <person name="Whitehead S.L."/>
            <person name="Whiteley M.N."/>
            <person name="Wilkinson J.E."/>
            <person name="Willey D.L."/>
            <person name="Williams G."/>
            <person name="Williams L."/>
            <person name="Williamson A."/>
            <person name="Williamson H."/>
            <person name="Wilming L."/>
            <person name="Woodmansey R.L."/>
            <person name="Wray P.W."/>
            <person name="Yen J."/>
            <person name="Zhang J."/>
            <person name="Zhou J."/>
            <person name="Zoghbi H."/>
            <person name="Zorilla S."/>
            <person name="Buck D."/>
            <person name="Reinhardt R."/>
            <person name="Poustka A."/>
            <person name="Rosenthal A."/>
            <person name="Lehrach H."/>
            <person name="Meindl A."/>
            <person name="Minx P.J."/>
            <person name="Hillier L.W."/>
            <person name="Willard H.F."/>
            <person name="Wilson R.K."/>
            <person name="Waterston R.H."/>
            <person name="Rice C.M."/>
            <person name="Vaudin M."/>
            <person name="Coulson A."/>
            <person name="Nelson D.L."/>
            <person name="Weinstock G."/>
            <person name="Sulston J.E."/>
            <person name="Durbin R.M."/>
            <person name="Hubbard T."/>
            <person name="Gibbs R.A."/>
            <person name="Beck S."/>
            <person name="Rogers J."/>
            <person name="Bentley D.R."/>
        </authorList>
    </citation>
    <scope>NUCLEOTIDE SEQUENCE [LARGE SCALE GENOMIC DNA]</scope>
</reference>
<reference key="9">
    <citation type="journal article" date="2004" name="Genome Res.">
        <title>The status, quality, and expansion of the NIH full-length cDNA project: the Mammalian Gene Collection (MGC).</title>
        <authorList>
            <consortium name="The MGC Project Team"/>
        </authorList>
    </citation>
    <scope>NUCLEOTIDE SEQUENCE [LARGE SCALE MRNA] (ISOFORM A)</scope>
    <source>
        <tissue>Placenta</tissue>
    </source>
</reference>
<reference key="10">
    <citation type="journal article" date="1996" name="Mamm. Genome">
        <title>Isolation, physical mapping, and Northern analysis of the X-linked human gene encoding methyl CpG-binding protein, MECP2.</title>
        <authorList>
            <person name="D'Esposito M."/>
            <person name="Quaderi N.A."/>
            <person name="Ciccodicola A."/>
            <person name="Bruni P."/>
            <person name="Esposito T."/>
            <person name="D'Urso M."/>
            <person name="Brown S.D.M."/>
        </authorList>
    </citation>
    <scope>NUCLEOTIDE SEQUENCE [MRNA] OF 10-486 (ISOFORM A)</scope>
    <source>
        <tissue>Skeletal muscle</tissue>
    </source>
</reference>
<reference key="11">
    <citation type="submission" date="1996-12" db="EMBL/GenBank/DDBJ databases">
        <title>Genetic organization of human methyl-CpG-binding protein 2.</title>
        <authorList>
            <person name="Reichwald K."/>
            <person name="Bauer D."/>
            <person name="Brenner V."/>
            <person name="Drescher B."/>
            <person name="Coy J.F."/>
            <person name="Kioschis P."/>
            <person name="Korn B."/>
            <person name="Nyakatura G."/>
            <person name="Platzer M."/>
            <person name="Poustka A."/>
            <person name="Sandoval N."/>
            <person name="Rosenthal A."/>
        </authorList>
    </citation>
    <scope>NUCLEOTIDE SEQUENCE [GENOMIC DNA] OF 10-486 (ISOFORM A)</scope>
</reference>
<reference key="12">
    <citation type="journal article" date="2004" name="Nucleic Acids Res.">
        <title>The major form of MeCP2 has a novel N-terminus generated by alternative splicing.</title>
        <authorList>
            <person name="Kriaucionis S."/>
            <person name="Bird A."/>
        </authorList>
    </citation>
    <scope>IDENTIFICATION (ISOFORM B)</scope>
</reference>
<reference key="13">
    <citation type="journal article" date="2003" name="Hum. Mutat.">
        <title>Mutations and polymorphisms in the human methyl CpG-binding protein MECP2.</title>
        <authorList>
            <person name="Miltenberger-Miltenyi G."/>
            <person name="Laccone F."/>
        </authorList>
    </citation>
    <scope>REVIEW ON VARIANTS</scope>
</reference>
<reference key="14">
    <citation type="journal article" date="2005" name="Hum. Mol. Genet.">
        <title>CDKL5 belongs to the same molecular pathway of MeCP2 and it is responsible for the early-onset seizure variant of Rett syndrome.</title>
        <authorList>
            <person name="Mari F."/>
            <person name="Azimonti S."/>
            <person name="Bertani I."/>
            <person name="Bolognese F."/>
            <person name="Colombo E."/>
            <person name="Caselli R."/>
            <person name="Scala E."/>
            <person name="Longo I."/>
            <person name="Grosso S."/>
            <person name="Pescucci C."/>
            <person name="Ariani F."/>
            <person name="Hayek G."/>
            <person name="Balestri P."/>
            <person name="Bergo A."/>
            <person name="Badaracco G."/>
            <person name="Zappella M."/>
            <person name="Broccoli V."/>
            <person name="Renieri A."/>
            <person name="Kilstrup-Nielsen C."/>
            <person name="Landsberger N."/>
        </authorList>
    </citation>
    <scope>INTERACTION WITH CDKL5</scope>
</reference>
<reference key="15">
    <citation type="journal article" date="2006" name="Cell">
        <title>Global, in vivo, and site-specific phosphorylation dynamics in signaling networks.</title>
        <authorList>
            <person name="Olsen J.V."/>
            <person name="Blagoev B."/>
            <person name="Gnad F."/>
            <person name="Macek B."/>
            <person name="Kumar C."/>
            <person name="Mortensen P."/>
            <person name="Mann M."/>
        </authorList>
    </citation>
    <scope>IDENTIFICATION BY MASS SPECTROMETRY [LARGE SCALE ANALYSIS]</scope>
    <source>
        <tissue>Cervix carcinoma</tissue>
    </source>
</reference>
<reference key="16">
    <citation type="journal article" date="2008" name="J. Proteome Res.">
        <title>Phosphorylation analysis of primary human T lymphocytes using sequential IMAC and titanium oxide enrichment.</title>
        <authorList>
            <person name="Carrascal M."/>
            <person name="Ovelleiro D."/>
            <person name="Casas V."/>
            <person name="Gay M."/>
            <person name="Abian J."/>
        </authorList>
    </citation>
    <scope>IDENTIFICATION BY MASS SPECTROMETRY [LARGE SCALE ANALYSIS]</scope>
    <source>
        <tissue>T-cell</tissue>
    </source>
</reference>
<reference key="17">
    <citation type="journal article" date="2008" name="Proc. Natl. Acad. Sci. U.S.A.">
        <title>A quantitative atlas of mitotic phosphorylation.</title>
        <authorList>
            <person name="Dephoure N."/>
            <person name="Zhou C."/>
            <person name="Villen J."/>
            <person name="Beausoleil S.A."/>
            <person name="Bakalarski C.E."/>
            <person name="Elledge S.J."/>
            <person name="Gygi S.P."/>
        </authorList>
    </citation>
    <scope>PHOSPHORYLATION [LARGE SCALE ANALYSIS] AT SER-80; SER-116 AND SER-426</scope>
    <scope>IDENTIFICATION BY MASS SPECTROMETRY [LARGE SCALE ANALYSIS]</scope>
    <source>
        <tissue>Cervix carcinoma</tissue>
    </source>
</reference>
<reference key="18">
    <citation type="journal article" date="2009" name="Anal. Chem.">
        <title>Lys-N and trypsin cover complementary parts of the phosphoproteome in a refined SCX-based approach.</title>
        <authorList>
            <person name="Gauci S."/>
            <person name="Helbig A.O."/>
            <person name="Slijper M."/>
            <person name="Krijgsveld J."/>
            <person name="Heck A.J."/>
            <person name="Mohammed S."/>
        </authorList>
    </citation>
    <scope>IDENTIFICATION BY MASS SPECTROMETRY [LARGE SCALE ANALYSIS]</scope>
</reference>
<reference key="19">
    <citation type="journal article" date="2009" name="Sci. Signal.">
        <title>Quantitative phosphoproteomic analysis of T cell receptor signaling reveals system-wide modulation of protein-protein interactions.</title>
        <authorList>
            <person name="Mayya V."/>
            <person name="Lundgren D.H."/>
            <person name="Hwang S.-I."/>
            <person name="Rezaul K."/>
            <person name="Wu L."/>
            <person name="Eng J.K."/>
            <person name="Rodionov V."/>
            <person name="Han D.K."/>
        </authorList>
    </citation>
    <scope>PHOSPHORYLATION [LARGE SCALE ANALYSIS] AT SER-80</scope>
    <scope>IDENTIFICATION BY MASS SPECTROMETRY [LARGE SCALE ANALYSIS]</scope>
    <source>
        <tissue>Leukemic T-cell</tissue>
    </source>
</reference>
<reference key="20">
    <citation type="journal article" date="2009" name="Science">
        <title>Lysine acetylation targets protein complexes and co-regulates major cellular functions.</title>
        <authorList>
            <person name="Choudhary C."/>
            <person name="Kumar C."/>
            <person name="Gnad F."/>
            <person name="Nielsen M.L."/>
            <person name="Rehman M."/>
            <person name="Walther T.C."/>
            <person name="Olsen J.V."/>
            <person name="Mann M."/>
        </authorList>
    </citation>
    <scope>ACETYLATION [LARGE SCALE ANALYSIS] AT LYS-449</scope>
    <scope>IDENTIFICATION BY MASS SPECTROMETRY [LARGE SCALE ANALYSIS]</scope>
</reference>
<reference key="21">
    <citation type="journal article" date="2010" name="Sci. Signal.">
        <title>Quantitative phosphoproteomics reveals widespread full phosphorylation site occupancy during mitosis.</title>
        <authorList>
            <person name="Olsen J.V."/>
            <person name="Vermeulen M."/>
            <person name="Santamaria A."/>
            <person name="Kumar C."/>
            <person name="Miller M.L."/>
            <person name="Jensen L.J."/>
            <person name="Gnad F."/>
            <person name="Cox J."/>
            <person name="Jensen T.S."/>
            <person name="Nigg E.A."/>
            <person name="Brunak S."/>
            <person name="Mann M."/>
        </authorList>
    </citation>
    <scope>PHOSPHORYLATION [LARGE SCALE ANALYSIS] AT SER-80 AND SER-216</scope>
    <scope>IDENTIFICATION BY MASS SPECTROMETRY [LARGE SCALE ANALYSIS]</scope>
    <source>
        <tissue>Cervix carcinoma</tissue>
    </source>
</reference>
<reference key="22">
    <citation type="journal article" date="2011" name="Sci. Signal.">
        <title>System-wide temporal characterization of the proteome and phosphoproteome of human embryonic stem cell differentiation.</title>
        <authorList>
            <person name="Rigbolt K.T."/>
            <person name="Prokhorova T.A."/>
            <person name="Akimov V."/>
            <person name="Henningsen J."/>
            <person name="Johansen P.T."/>
            <person name="Kratchmarova I."/>
            <person name="Kassem M."/>
            <person name="Mann M."/>
            <person name="Olsen J.V."/>
            <person name="Blagoev B."/>
        </authorList>
    </citation>
    <scope>PHOSPHORYLATION [LARGE SCALE ANALYSIS] AT SER-80</scope>
    <scope>IDENTIFICATION BY MASS SPECTROMETRY [LARGE SCALE ANALYSIS]</scope>
</reference>
<reference key="23">
    <citation type="journal article" date="2013" name="J. Proteome Res.">
        <title>Toward a comprehensive characterization of a human cancer cell phosphoproteome.</title>
        <authorList>
            <person name="Zhou H."/>
            <person name="Di Palma S."/>
            <person name="Preisinger C."/>
            <person name="Peng M."/>
            <person name="Polat A.N."/>
            <person name="Heck A.J."/>
            <person name="Mohammed S."/>
        </authorList>
    </citation>
    <scope>PHOSPHORYLATION [LARGE SCALE ANALYSIS] AT SER-80 AND SER-229</scope>
    <scope>IDENTIFICATION BY MASS SPECTROMETRY [LARGE SCALE ANALYSIS]</scope>
    <source>
        <tissue>Cervix carcinoma</tissue>
        <tissue>Erythroleukemia</tissue>
    </source>
</reference>
<reference key="24">
    <citation type="journal article" date="2014" name="J. Proteomics">
        <title>An enzyme assisted RP-RPLC approach for in-depth analysis of human liver phosphoproteome.</title>
        <authorList>
            <person name="Bian Y."/>
            <person name="Song C."/>
            <person name="Cheng K."/>
            <person name="Dong M."/>
            <person name="Wang F."/>
            <person name="Huang J."/>
            <person name="Sun D."/>
            <person name="Wang L."/>
            <person name="Ye M."/>
            <person name="Zou H."/>
        </authorList>
    </citation>
    <scope>PHOSPHORYLATION [LARGE SCALE ANALYSIS] AT SER-426</scope>
    <scope>IDENTIFICATION BY MASS SPECTROMETRY [LARGE SCALE ANALYSIS]</scope>
    <source>
        <tissue>Liver</tissue>
    </source>
</reference>
<reference key="25">
    <citation type="journal article" date="1999" name="J. Mol. Biol.">
        <title>The solution structure of the domain from MeCP2 that binds to methylated DNA.</title>
        <authorList>
            <person name="Wakefield R.I."/>
            <person name="Smith B.O."/>
            <person name="Nan X."/>
            <person name="Free A."/>
            <person name="Soteriou A."/>
            <person name="Uhrin D."/>
            <person name="Bird A.P."/>
            <person name="Barlow P.N."/>
        </authorList>
    </citation>
    <scope>STRUCTURE BY NMR OF 77-166</scope>
</reference>
<reference key="26">
    <citation type="journal article" date="1999" name="Am. J. Hum. Genet.">
        <title>Rett syndrome and beyond: recurrent spontaneous and familial MECP2 mutations at CpG hotspots.</title>
        <authorList>
            <person name="Wan M."/>
            <person name="Lee S.S.J."/>
            <person name="Zhang X."/>
            <person name="Houwink-Manville I."/>
            <person name="Song H.-R."/>
            <person name="Amir R.E."/>
            <person name="Budden S."/>
            <person name="Naidu S."/>
            <person name="Pereira J.L.P."/>
            <person name="Lo I.F.M."/>
            <person name="Zoghbi H.Y."/>
            <person name="Schanen N.C."/>
            <person name="Francke U."/>
        </authorList>
    </citation>
    <scope>VARIANTS RTT TRP-106; CYS-133; SER-155; MET-158 AND CYS-306</scope>
    <scope>VARIANT LYS-397</scope>
</reference>
<reference key="27">
    <citation type="journal article" date="1999" name="Nat. Genet.">
        <title>Rett syndrome is caused by mutations in X-linked MECP2, encoding methyl-CpG-binding protein 2.</title>
        <authorList>
            <person name="Amir R.E."/>
            <person name="Van den Veyver I.B."/>
            <person name="Wan M."/>
            <person name="Tran C.Q."/>
            <person name="Francke U."/>
            <person name="Zoghbi H.Y."/>
        </authorList>
    </citation>
    <scope>VARIANTS RTT TRP-106; CYS-133; SER-155 AND MET-158</scope>
</reference>
<reference key="28">
    <citation type="journal article" date="2000" name="Am. J. Hum. Genet.">
        <title>A mutation in the Rett syndrome gene, MECP2, causes X-linked mental retardation and progressive spasticity in males.</title>
        <authorList>
            <person name="Meloni I."/>
            <person name="Bruttini M."/>
            <person name="Longo I."/>
            <person name="Mari F."/>
            <person name="Rizzolio F."/>
            <person name="D'Adamo P."/>
            <person name="Denvriendt K."/>
            <person name="Fryns J.-P."/>
            <person name="Toniolo D."/>
            <person name="Renieri A."/>
        </authorList>
    </citation>
    <scope>INVOLVEMENT IN MRXS13</scope>
</reference>
<reference key="29">
    <citation type="journal article" date="2000" name="Am. J. Hum. Genet.">
        <title>Diagnostic testing for Rett syndrome by DHPLC and direct sequencing analysis of the MECP2 gene: identification of several novel mutations and polymorphisms.</title>
        <authorList>
            <person name="Buyse I.M."/>
            <person name="Fang P."/>
            <person name="Hoon K.T."/>
            <person name="Amir R.E."/>
            <person name="Zoghbi H.Y."/>
            <person name="Roa B.B."/>
        </authorList>
    </citation>
    <scope>VARIANTS RTT VAL-100; GLN-106; TRP-106; CYS-133; ARG-152; SER-155; MET-158; ARG-305; CYS-306 AND HIS-306</scope>
    <scope>VARIANTS CYS-86; MET-203; PRO-287; ALA-291; LYS-397; ILE-412 AND THR-444</scope>
</reference>
<reference key="30">
    <citation type="journal article" date="2000" name="FEBS Lett.">
        <title>MECP2 mutation in male patients with non-specific X-linked mental retardation.</title>
        <authorList>
            <person name="Orrico A."/>
            <person name="Lam C."/>
            <person name="Galli L."/>
            <person name="Dotti M.T."/>
            <person name="Hayek G."/>
            <person name="Tong S.F."/>
            <person name="Poon P.M."/>
            <person name="Zappella M."/>
            <person name="Federico A."/>
            <person name="Sorrentino V."/>
        </authorList>
    </citation>
    <scope>VARIANT MRXS13 VAL-140</scope>
    <scope>VARIANT MET-203</scope>
</reference>
<reference key="31">
    <citation type="journal article" date="2000" name="Hum. Mol. Genet.">
        <title>Long-read sequence analysis of the MECP2 gene in Rett syndrome patients: correlation of disease severity with mutation type and location.</title>
        <authorList>
            <person name="Cheadle J.P."/>
            <person name="Gill H."/>
            <person name="Fleming N."/>
            <person name="Maynard J."/>
            <person name="Kerr A."/>
            <person name="Leonard H."/>
            <person name="Krawczak M."/>
            <person name="Cooper D.N."/>
            <person name="Lynch S."/>
            <person name="Thomas N."/>
            <person name="Hughes H."/>
            <person name="Hulten M."/>
            <person name="Ravine D."/>
            <person name="Sampson J.R."/>
            <person name="Clarke A."/>
        </authorList>
    </citation>
    <scope>VARIANTS RTT LEU-101; HIS-101; THR-101; TRP-106; CYS-133; CYS-134; ARG-152; MET-158; ARG-225; LEU-302; CYS-306 AND HIS-306</scope>
    <scope>VARIANTS LEU-229 AND THR-439</scope>
</reference>
<reference key="32">
    <citation type="journal article" date="2000" name="Hum. Mol. Genet.">
        <title>MECP2 mutations account for most cases of typical forms of Rett syndrome.</title>
        <authorList>
            <person name="Bienvenu T."/>
            <person name="Carrie A."/>
            <person name="de Roux N."/>
            <person name="Vinet M.-C."/>
            <person name="Jonveaux P."/>
            <person name="Couvert P."/>
            <person name="Villard L."/>
            <person name="Arzimanoglou A."/>
            <person name="Beldjord C."/>
            <person name="Fontes M."/>
            <person name="Tardieu M."/>
            <person name="Chelly J."/>
        </authorList>
    </citation>
    <scope>VARIANTS RTT GLN-106; MET-158; ARG-302; CYS-306 AND ALA-322</scope>
</reference>
<reference key="33">
    <citation type="journal article" date="2000" name="J. Hum. Genet.">
        <title>Mutational analysis of the MECP2 gene in Japanese patients with Rett syndrome.</title>
        <authorList>
            <person name="Amano K."/>
            <person name="Nomura Y."/>
            <person name="Segawa M."/>
            <person name="Yamakawa K."/>
        </authorList>
    </citation>
    <scope>VARIANTS RTT MET-158; HIS-302 AND CYS-306</scope>
    <scope>VARIANTS VAL-201; ALA-232; LEU-251 AND SER-376</scope>
</reference>
<reference key="34">
    <citation type="journal article" date="2000" name="J. Med. Genet.">
        <title>Mutation screening in Rett syndrome patients.</title>
        <authorList>
            <person name="Xiang F."/>
            <person name="Buervenich S."/>
            <person name="Nicolao P."/>
            <person name="Bailey M.E."/>
            <person name="Zhang Z."/>
            <person name="Anvret M."/>
        </authorList>
    </citation>
    <scope>VARIANTS RTT GLU-97; TRP-106; CYS-133; ILE-155; MET-158 AND CYS-306</scope>
</reference>
<reference key="35">
    <citation type="journal article" date="2000" name="J. Med. Genet.">
        <title>Mutation analysis of the methyl-CpG binding protein 2 gene (MECP2) in patients with Rett syndrome.</title>
        <authorList>
            <person name="Obata K."/>
            <person name="Matsuishi T."/>
            <person name="Yamashita Y."/>
            <person name="Fukuda T."/>
            <person name="Kuwajima K."/>
            <person name="Horiuchi I."/>
            <person name="Nagamitsu S."/>
            <person name="Iwanaga R."/>
            <person name="Kimura A."/>
            <person name="Omori I."/>
            <person name="Endo S."/>
            <person name="Mori K."/>
            <person name="Kondo I."/>
        </authorList>
    </citation>
    <scope>VARIANTS RTT TRP-106; PHE-124; CYS-133; CYS-134; ARG-152; MET-158 AND CYS-306</scope>
</reference>
<reference key="36">
    <citation type="journal article" date="2000" name="J. Med. Genet.">
        <title>Mutations in the MECP2 gene in a cohort of girls with Rett syndrome.</title>
        <authorList>
            <person name="Hampson K."/>
            <person name="Woods C.G."/>
            <person name="Latif F."/>
            <person name="Webb T."/>
        </authorList>
    </citation>
    <scope>VARIANTS RTT ARG-101; TRP-106; MET-158 AND CYS-306</scope>
    <scope>VARIANT LYS-397</scope>
</reference>
<reference key="37">
    <citation type="journal article" date="2001" name="Ann. Neurol.">
        <title>Classic Rett syndrome in a boy as a result of somatic mosaicism for a MECP2 mutation.</title>
        <authorList>
            <person name="Armstrong J."/>
            <person name="Poo P."/>
            <person name="Pineda M."/>
            <person name="Aibar E."/>
            <person name="Gean E."/>
            <person name="Catala V."/>
            <person name="Monros E."/>
        </authorList>
    </citation>
    <scope>VARIANT RTT HIS-133</scope>
</reference>
<reference key="38">
    <citation type="journal article" date="2001" name="Brain Dev.">
        <title>Mutational analysis of MECP2 in Japanese patients with atypical Rett syndrome.</title>
        <authorList>
            <person name="Inui K."/>
            <person name="Akagi M."/>
            <person name="Ono J."/>
            <person name="Tsukamoto H."/>
            <person name="Shimono K."/>
            <person name="Mano T."/>
            <person name="Imai K."/>
            <person name="Yamada M."/>
            <person name="Muramatsu T."/>
            <person name="Sakai N."/>
            <person name="Okada S."/>
        </authorList>
    </citation>
    <scope>VARIANTS RTT ASP-120; CYS-133; MET-158 AND CYS-306</scope>
</reference>
<reference key="39">
    <citation type="journal article" date="2001" name="Brain Dev.">
        <title>Spectrum and distribution of MECP2 mutations in 64 Italian Rett syndrome girls: tentative genotype/phenotype correlation.</title>
        <authorList>
            <person name="Giunti L."/>
            <person name="Pelagatti S."/>
            <person name="Lazzerini V."/>
            <person name="Guarducci S."/>
            <person name="Lapi E."/>
            <person name="Coviello S."/>
            <person name="Cecconi A."/>
            <person name="Ombroni L."/>
            <person name="Andreucci E."/>
            <person name="Sani I."/>
            <person name="Brusaferri A."/>
            <person name="Lasagni A."/>
            <person name="Ricotti G."/>
            <person name="Giometto B."/>
            <person name="Nicolao P."/>
            <person name="Gasparini P."/>
            <person name="Granatiero M."/>
            <person name="Giovannucci Uzielli M.L."/>
        </authorList>
    </citation>
    <scope>VARIANTS RTT TRP-106; CYS-134; ARG-152; MET-158; ALA-302; CYS-306 AND ALA-322</scope>
    <scope>VARIANTS VAL-201 AND LYS-397</scope>
</reference>
<reference key="40">
    <citation type="journal article" date="2001" name="Hum. Mol. Genet.">
        <title>MECP2 is highly mutated in X-linked mental retardation.</title>
        <authorList>
            <person name="Couvert P."/>
            <person name="Bienvenu T."/>
            <person name="Aquaviva C."/>
            <person name="Poirier K."/>
            <person name="Moraine C."/>
            <person name="Gendrot C."/>
            <person name="Verloes A."/>
            <person name="Andres C."/>
            <person name="Le Fevre A.C."/>
            <person name="Souville I."/>
            <person name="Steffann J."/>
            <person name="des Portes V."/>
            <person name="Ropers H.-H."/>
            <person name="Yntema H.G."/>
            <person name="Fryns J.-P."/>
            <person name="Briault S."/>
            <person name="Chelly J."/>
            <person name="Cherif B."/>
        </authorList>
    </citation>
    <scope>VARIANTS MRXS13 GLY-137; VAL-140; TRP-167; GLU-284; LEU-399 AND GLN-453</scope>
</reference>
<reference key="41">
    <citation type="journal article" date="2001" name="Hum. Mutat.">
        <title>Mutation spectrum in patients with Rett syndrome in the German population: evidence of hot spot regions.</title>
        <authorList>
            <person name="Laccone F."/>
            <person name="Huppke P."/>
            <person name="Hanefeld F."/>
            <person name="Meins M."/>
        </authorList>
    </citation>
    <scope>VARIANTS RTT TRP-106; GLY-111; CYS-133; GLU-135; ARG-152; GLY-156; MET-158; ILE-210; ARG-302 AND CYS-306</scope>
</reference>
<reference key="42">
    <citation type="journal article" date="2001" name="J. Med. Genet.">
        <title>Angelman syndrome phenotype associated with mutations in MECP2, a gene encoding a methyl CpG binding protein.</title>
        <authorList>
            <person name="Watson P."/>
            <person name="Black G."/>
            <person name="Ramsden S."/>
            <person name="Barrow M."/>
            <person name="Super M."/>
            <person name="Kerr B."/>
            <person name="Clayton-Smith J."/>
        </authorList>
    </citation>
    <scope>VARIANT RTT ARG-101</scope>
    <scope>INVOLVEMENT IN AS</scope>
</reference>
<reference key="43">
    <citation type="journal article" date="2001" name="J. Med. Genet.">
        <title>MECP2 mutation in non-fatal, non-progressive encephalopathy in a male.</title>
        <authorList>
            <person name="Imessaoudene B."/>
            <person name="Bonnefont J.-P."/>
            <person name="Royer G."/>
            <person name="Cormier-Daire V."/>
            <person name="Lyonnet S."/>
            <person name="Lyon G."/>
            <person name="Munnich A."/>
            <person name="Amiel J."/>
        </authorList>
    </citation>
    <scope>VARIANT ENS-MECP2 SER-428</scope>
</reference>
<reference key="44">
    <citation type="journal article" date="2001" name="J. Mol. Med.">
        <title>Mutation analysis of the MECP2 gene in British and Italian Rett syndrome females.</title>
        <authorList>
            <person name="Vacca M."/>
            <person name="Filippini F."/>
            <person name="Budillon A."/>
            <person name="Rossi V."/>
            <person name="Mercadante G."/>
            <person name="Manzati E."/>
            <person name="Gualandi F."/>
            <person name="Bigoni S."/>
            <person name="Trabanelli C."/>
            <person name="Pini G."/>
            <person name="Calzolari E."/>
            <person name="Ferlini A."/>
            <person name="Meloni I."/>
            <person name="Hayek G."/>
            <person name="Zappella M."/>
            <person name="Renieri A."/>
            <person name="D'Urso M."/>
            <person name="D'Esposito M."/>
            <person name="MacDonald F."/>
            <person name="Kerr A."/>
            <person name="Dhanjal S."/>
            <person name="Hulten M."/>
        </authorList>
    </citation>
    <scope>VARIANTS RTT SER-101; TRP-106; CYS-133; CYS-134; ARG-152; ALA-158 AND MET-158</scope>
</reference>
<reference key="45">
    <citation type="journal article" date="2001" name="Neurology">
        <title>MeCP2 mutations in children with and without the phenotype of Rett syndrome.</title>
        <authorList>
            <person name="Hoffbuhr K."/>
            <person name="Devaney J.M."/>
            <person name="LaFleur B."/>
            <person name="Sirianni N."/>
            <person name="Scacheri C."/>
            <person name="Giron J."/>
            <person name="Schuette J."/>
            <person name="Innis J."/>
            <person name="Marino M."/>
            <person name="Philippart M."/>
            <person name="Narayanan V."/>
            <person name="Umansky R."/>
            <person name="Kronn D."/>
            <person name="Hoffman E.P."/>
            <person name="Naidu S."/>
        </authorList>
    </citation>
    <scope>VARIANTS RTT TYR-97; TRP-106; HIS-133; CYS-133; ARG-152; MET-158; ARG-305; CYS-306 AND LEU-322</scope>
    <scope>VARIANT MET-197</scope>
</reference>
<reference key="46">
    <citation type="journal article" date="2002" name="Am. J. Hum. Genet.">
        <title>A mutation hot spot for nonspecific X-linked mental retardation in the MECP2 gene causes the PPM-X syndrome.</title>
        <authorList>
            <person name="Klauck S.M."/>
            <person name="Lindsay S."/>
            <person name="Beyer K.S."/>
            <person name="Splitt M."/>
            <person name="Burn J."/>
            <person name="Poustka A."/>
        </authorList>
    </citation>
    <scope>VARIANT MRXS13 VAL-140</scope>
</reference>
<reference key="47">
    <citation type="journal article" date="2002" name="Eur. J. Hum. Genet.">
        <title>Polymorphisms in the C-terminal domain of MECP2 in mentally handicapped boys: implications for genetic counselling.</title>
        <authorList>
            <person name="Moncla A."/>
            <person name="Kpebe A."/>
            <person name="Missirian C."/>
            <person name="Mancini J."/>
            <person name="Villard L."/>
        </authorList>
    </citation>
    <scope>VARIANTS PRO-359 AND LYS-397</scope>
</reference>
<reference key="48">
    <citation type="journal article" date="2002" name="Eur. J. Hum. Genet.">
        <title>Low frequency of MECP2 mutations in mentally retarded males.</title>
        <authorList>
            <person name="Yntema H.G."/>
            <person name="Kleefstra T."/>
            <person name="Oudakker A.R."/>
            <person name="Romein T."/>
            <person name="de Vries B.B.A."/>
            <person name="Nillesen W."/>
            <person name="Sistermans E.A."/>
            <person name="Brunner H.G."/>
            <person name="Hamel B.C.J."/>
            <person name="van Bokhoven H."/>
        </authorList>
    </citation>
    <scope>VARIANTS SER-196; SER-228; LYS-394 AND SER-480</scope>
</reference>
<reference key="49">
    <citation type="journal article" date="2002" name="Hum. Genet.">
        <title>Mutation analysis of the coding sequence of the MECP2 gene in infantile autism.</title>
        <authorList>
            <person name="Beyer K.S."/>
            <person name="Blasi F."/>
            <person name="Bacchelli E."/>
            <person name="Klauck S.M."/>
            <person name="Maestrini E."/>
            <person name="Poustka A."/>
        </authorList>
    </citation>
    <scope>VARIANTS VAL-181; SER-376; PRO-388 DEL AND LEU-402</scope>
</reference>
<reference key="50">
    <citation type="journal article" date="2002" name="Hum. Mutat.">
        <title>Identification of a family with nonspecific mental retardation (MRX79) with the A140V mutation in the MECP2 gene: is there a need for routine screening?</title>
        <authorList>
            <person name="Winnepenninckx B."/>
            <person name="Errijgers V."/>
            <person name="Hayez-Delatte F."/>
            <person name="Reyniers E."/>
            <person name="Kooy R.F."/>
        </authorList>
    </citation>
    <scope>VARIANT MRXS13 VAL-140</scope>
</reference>
<reference key="51">
    <citation type="journal article" date="2002" name="J. Med. Genet.">
        <title>MECP2 gene nucleotide changes and their pathogenicity in males: proceed with caution.</title>
        <authorList>
            <person name="Laccone F."/>
            <person name="Zoll B."/>
            <person name="Huppke P."/>
            <person name="Hanefeld F."/>
            <person name="Pepinski W."/>
            <person name="Trappe R."/>
        </authorList>
    </citation>
    <scope>VARIANT MRXS13 VAL-140</scope>
    <scope>VARIANT RTT TRP-344</scope>
    <scope>VARIANTS MET-197; SER-376; LEU-399 AND SER-428</scope>
    <scope>DISCUSSION OF PATHOGENIC ROLE</scope>
</reference>
<reference key="52">
    <citation type="journal article" date="2002" name="Neurology">
        <title>A Rett syndrome MECP2 mutation that causes mental retardation in men.</title>
        <authorList>
            <person name="Dotti M.T."/>
            <person name="Orrico A."/>
            <person name="De Stefano N."/>
            <person name="Battisti C."/>
            <person name="Sicurelli F."/>
            <person name="Severi S."/>
            <person name="Lam C.-W."/>
            <person name="Galli L."/>
            <person name="Sorrentino V."/>
            <person name="Federico A."/>
        </authorList>
    </citation>
    <scope>VARIANT MRXS13 VAL-140</scope>
</reference>
<reference key="53">
    <citation type="journal article" date="2003" name="Am. J. Med. Genet. A">
        <title>Mutation analysis of the MECP2 gene in patients with Rett syndrome.</title>
        <authorList>
            <person name="Conforti F.L."/>
            <person name="Mazzei R."/>
            <person name="Magariello A."/>
            <person name="Patitucci A.L."/>
            <person name="Gabriele A.L."/>
            <person name="Muglia M."/>
            <person name="Quattrone A."/>
            <person name="Fiumara A."/>
            <person name="Pavone L."/>
            <person name="Barone R."/>
            <person name="Nistico R."/>
            <person name="Mangone L."/>
        </authorList>
    </citation>
    <scope>VARIANTS RTT CYS-133; MET-158; CYS-306 AND SER-388</scope>
    <scope>VARIANT SER-376</scope>
</reference>
<reference key="54">
    <citation type="journal article" date="2003" name="Am. J. Med. Genet. A">
        <title>Rett syndrome in a 47,XXX patient with a de novo MECP2 mutation.</title>
        <authorList>
            <person name="Hammer S."/>
            <person name="Dorrani N."/>
            <person name="Hartiala J."/>
            <person name="Stein S."/>
            <person name="Schanen N.C."/>
        </authorList>
    </citation>
    <scope>VARIANT RTT VAL-100</scope>
</reference>
<reference key="55">
    <citation type="journal article" date="2003" name="Am. J. Med. Genet. A">
        <title>Rett syndrome in adolescent and adult females: clinical and molecular genetic findings.</title>
        <authorList>
            <person name="Smeets E."/>
            <person name="Schollen E."/>
            <person name="Moog U."/>
            <person name="Matthijs G."/>
            <person name="Herbergs J."/>
            <person name="Smeets H."/>
            <person name="Curfs L."/>
            <person name="Schrander-Stumpel C."/>
            <person name="Fryns J.-P."/>
        </authorList>
    </citation>
    <scope>VARIANTS RTT GLN-10; PRO-128; CYS-133; ARG-152; MET-158 AND CYS-306</scope>
</reference>
<reference key="56">
    <citation type="journal article" date="2003" name="Eur. J. Paediatr. Neurol.">
        <title>Neurodevelopmental disorders in males related to the gene causing Rett syndrome in females (MECP2).</title>
        <authorList>
            <person name="Moog U."/>
            <person name="Smeets E.E.J."/>
            <person name="van Roozendaal K.E.P."/>
            <person name="Schoenmakers S."/>
            <person name="Herbergs J."/>
            <person name="Schoonbrood-Lenssen A.M.J."/>
            <person name="Schrander-Stumpel C.T.R.M."/>
        </authorList>
    </citation>
    <scope>VARIANT MRXS13 LEU-225</scope>
</reference>
<reference key="57">
    <citation type="journal article" date="2003" name="Pediatr. Neurol.">
        <title>Identification of MeCP2 mutations in a series of females with autistic disorder.</title>
        <authorList>
            <person name="Carney R.M."/>
            <person name="Wolpert C.M."/>
            <person name="Ravan S.A."/>
            <person name="Shahbazian M."/>
            <person name="Ashley-Koch A."/>
            <person name="Cuccaro M.L."/>
            <person name="Vance J.M."/>
            <person name="Pericak-Vance M.A."/>
        </authorList>
    </citation>
    <scope>INVOLVEMENT IN AUTSX3</scope>
</reference>
<reference key="58">
    <citation type="journal article" date="2004" name="Am. J. Med. Genet. A">
        <title>Phenotypic manifestations of MECP2 mutations in classical and atypical Rett syndrome.</title>
        <authorList>
            <person name="Schanen C."/>
            <person name="Houwink E.J.F."/>
            <person name="Dorrani N."/>
            <person name="Lane J."/>
            <person name="Everett R."/>
            <person name="Feng A."/>
            <person name="Cantor R.M."/>
            <person name="Percy A."/>
        </authorList>
    </citation>
    <scope>VARIANTS RTT ARG-100; VAL-100; TRP-106; CYS-133; ARG-152; ALA-158; MET-158; VAL-161; CYS-306 AND HIS-306</scope>
</reference>
<reference key="59">
    <citation type="journal article" date="2005" name="Am. J. Hum. Genet.">
        <title>Duplication of the MECP2 region is a frequent cause of severe mental retardation and progressive neurological symptoms in males.</title>
        <authorList>
            <person name="Van Esch H."/>
            <person name="Bauters M."/>
            <person name="Ignatius J."/>
            <person name="Jansen M."/>
            <person name="Raynaud M."/>
            <person name="Hollanders K."/>
            <person name="Lugtenberg D."/>
            <person name="Bienvenu T."/>
            <person name="Jensen L.R."/>
            <person name="Gecz J."/>
            <person name="Moraine C."/>
            <person name="Marynen P."/>
            <person name="Fryns J.-P."/>
            <person name="Froyen G."/>
        </authorList>
    </citation>
    <scope>INVOLVEMENT IN MRXSL</scope>
</reference>
<reference key="60">
    <citation type="journal article" date="2006" name="Neurology">
        <title>A novel familial MECP2 mutation in a young boy: clinical and molecular findings.</title>
        <authorList>
            <person name="Ventura P."/>
            <person name="Galluzzi R."/>
            <person name="Bacca S.M."/>
            <person name="Giorda R."/>
            <person name="Massagli A."/>
        </authorList>
    </citation>
    <scope>VARIANT MRXS13 SER-322</scope>
</reference>
<reference key="61">
    <citation type="journal article" date="2007" name="Proc. Natl. Acad. Sci. U.S.A.">
        <title>Interaction between chromatin proteins MECP2 and ATRX is disrupted by mutations that cause inherited mental retardation.</title>
        <authorList>
            <person name="Nan X."/>
            <person name="Hou J."/>
            <person name="Maclean A."/>
            <person name="Nasir J."/>
            <person name="Lafuente M.J."/>
            <person name="Shu X."/>
            <person name="Kriaucionis S."/>
            <person name="Bird A."/>
        </authorList>
    </citation>
    <scope>CHARACTERIZATION OF VARIANT RTT CYS-133</scope>
    <scope>CHARACTERIZATION OF VARIANT MRXS13 VAL-140</scope>
</reference>
<reference key="62">
    <citation type="journal article" date="2013" name="Epilepsia">
        <title>Targeted capture and sequencing for detection of mutations causing early onset epileptic encephalopathy.</title>
        <authorList>
            <person name="Kodera H."/>
            <person name="Kato M."/>
            <person name="Nord A.S."/>
            <person name="Walsh T."/>
            <person name="Lee M."/>
            <person name="Yamanaka G."/>
            <person name="Tohyama J."/>
            <person name="Nakamura K."/>
            <person name="Nakagawa E."/>
            <person name="Ikeda T."/>
            <person name="Ben-Zeev B."/>
            <person name="Lev D."/>
            <person name="Lerman-Sagie T."/>
            <person name="Straussberg R."/>
            <person name="Tanabe S."/>
            <person name="Ueda K."/>
            <person name="Amamoto M."/>
            <person name="Ohta S."/>
            <person name="Nonoda Y."/>
            <person name="Nishiyama K."/>
            <person name="Tsurusaki Y."/>
            <person name="Nakashima M."/>
            <person name="Miyake N."/>
            <person name="Hayasaka K."/>
            <person name="King M.C."/>
            <person name="Matsumoto N."/>
            <person name="Saitsu H."/>
        </authorList>
    </citation>
    <scope>VARIANT RTT 270-ARG--SER-486 DEL</scope>
</reference>
<reference key="63">
    <citation type="journal article" date="2015" name="Epilepsia">
        <title>Diagnostic yield of genetic testing in epileptic encephalopathy in childhood.</title>
        <authorList>
            <person name="Mercimek-Mahmutoglu S."/>
            <person name="Patel J."/>
            <person name="Cordeiro D."/>
            <person name="Hewson S."/>
            <person name="Callen D."/>
            <person name="Donner E.J."/>
            <person name="Hahn C.D."/>
            <person name="Kannu P."/>
            <person name="Kobayashi J."/>
            <person name="Minassian B.A."/>
            <person name="Moharir M."/>
            <person name="Siriwardena K."/>
            <person name="Weiss S.K."/>
            <person name="Weksberg R."/>
            <person name="Snead O.C. III"/>
        </authorList>
    </citation>
    <scope>VARIANT RTT CYS-133</scope>
</reference>
<reference key="64">
    <citation type="journal article" date="2016" name="J. Med. Genet.">
        <title>Improving diagnosis and broadening the phenotypes in early-onset seizure and severe developmental delay disorders through gene panel analysis.</title>
        <authorList>
            <person name="Trump N."/>
            <person name="McTague A."/>
            <person name="Brittain H."/>
            <person name="Papandreou A."/>
            <person name="Meyer E."/>
            <person name="Ngoh A."/>
            <person name="Palmer R."/>
            <person name="Morrogh D."/>
            <person name="Boustred C."/>
            <person name="Hurst J.A."/>
            <person name="Jenkins L."/>
            <person name="Kurian M.A."/>
            <person name="Scott R.H."/>
        </authorList>
    </citation>
    <scope>VARIANTS RTT 270-ARG--SER-486 DEL AND CYS-306</scope>
</reference>
<reference key="65">
    <citation type="journal article" date="2017" name="Brain Dev.">
        <title>The therapeutic implication of a novel SCN2A mutation associated early-onset epileptic encephalopathy with Rett-like features.</title>
        <authorList>
            <person name="Liang J.S."/>
            <person name="Lin L.J."/>
            <person name="Yang M.T."/>
            <person name="Wang J.S."/>
            <person name="Lu J.F."/>
        </authorList>
    </citation>
    <scope>VARIANT RTT TRP-344</scope>
</reference>
<reference key="66">
    <citation type="journal article" date="2017" name="Hum. Mutat.">
        <title>Diagnostic targeted resequencing in 349 patients with drug-resistant pediatric epilepsies identifies causative mutations in 30 different genes.</title>
        <authorList>
            <consortium name="Clinical Study Group"/>
            <person name="Parrini E."/>
            <person name="Marini C."/>
            <person name="Mei D."/>
            <person name="Galuppi A."/>
            <person name="Cellini E."/>
            <person name="Pucatti D."/>
            <person name="Chiti L."/>
            <person name="Rutigliano D."/>
            <person name="Bianchini C."/>
            <person name="Virdo S."/>
            <person name="De Vita D."/>
            <person name="Bigoni S."/>
            <person name="Barba C."/>
            <person name="Mari F."/>
            <person name="Montomoli M."/>
            <person name="Pisano T."/>
            <person name="Rosati A."/>
            <person name="Guerrini R."/>
        </authorList>
    </citation>
    <scope>VARIANT RTT CYS-133</scope>
    <scope>VARIANT ASN-305</scope>
</reference>
<reference key="67">
    <citation type="journal article" date="2017" name="Proc. Natl. Acad. Sci. U.S.A.">
        <title>Structure of the MeCP2-TBLR1 complex reveals a molecular basis for Rett syndrome and related disorders.</title>
        <authorList>
            <person name="Kruusvee V."/>
            <person name="Lyst M.J."/>
            <person name="Taylor C."/>
            <person name="Tarnauskaite Z."/>
            <person name="Bird A.P."/>
            <person name="Cook A.G."/>
        </authorList>
    </citation>
    <scope>VARIANTS RTT ARG-305 AND CYS-306</scope>
    <scope>CHARACTERIZATION OF VARIANTS RTT ARG-305 AND CYS-306</scope>
    <scope>SUBCELLULAR LOCATION</scope>
    <scope>INTERACTION WITH TBL1XR1 AND TBL1X</scope>
</reference>
<feature type="chain" id="PRO_0000096345" description="Methyl-CpG-binding protein 2">
    <location>
        <begin position="1"/>
        <end position="486"/>
    </location>
</feature>
<feature type="domain" description="MBD" evidence="4">
    <location>
        <begin position="90"/>
        <end position="162"/>
    </location>
</feature>
<feature type="DNA-binding region" description="A.T hook 1">
    <location>
        <begin position="185"/>
        <end position="197"/>
    </location>
</feature>
<feature type="DNA-binding region" description="A.T hook 2">
    <location>
        <begin position="265"/>
        <end position="277"/>
    </location>
</feature>
<feature type="region of interest" description="Disordered" evidence="5">
    <location>
        <begin position="1"/>
        <end position="119"/>
    </location>
</feature>
<feature type="region of interest" description="Disordered" evidence="5">
    <location>
        <begin position="147"/>
        <end position="275"/>
    </location>
</feature>
<feature type="region of interest" description="Interaction with NCOR2" evidence="3">
    <location>
        <begin position="269"/>
        <end position="309"/>
    </location>
</feature>
<feature type="region of interest" description="Interaction with TBL1XR1" evidence="3">
    <location>
        <begin position="285"/>
        <end position="309"/>
    </location>
</feature>
<feature type="region of interest" description="Disordered" evidence="5">
    <location>
        <begin position="324"/>
        <end position="486"/>
    </location>
</feature>
<feature type="compositionally biased region" description="Basic and acidic residues" evidence="5">
    <location>
        <begin position="34"/>
        <end position="45"/>
    </location>
</feature>
<feature type="compositionally biased region" description="Basic and acidic residues" evidence="5">
    <location>
        <begin position="52"/>
        <end position="64"/>
    </location>
</feature>
<feature type="compositionally biased region" description="Low complexity" evidence="5">
    <location>
        <begin position="68"/>
        <end position="81"/>
    </location>
</feature>
<feature type="compositionally biased region" description="Low complexity" evidence="5">
    <location>
        <begin position="352"/>
        <end position="361"/>
    </location>
</feature>
<feature type="compositionally biased region" description="Pro residues" evidence="5">
    <location>
        <begin position="378"/>
        <end position="393"/>
    </location>
</feature>
<feature type="compositionally biased region" description="Low complexity" evidence="5">
    <location>
        <begin position="435"/>
        <end position="447"/>
    </location>
</feature>
<feature type="modified residue" description="Phosphoserine" evidence="2">
    <location>
        <position position="13"/>
    </location>
</feature>
<feature type="modified residue" description="Phosphoserine" evidence="53 55 56 57 58">
    <location>
        <position position="80"/>
    </location>
</feature>
<feature type="modified residue" description="Phosphoserine" evidence="53">
    <location>
        <position position="116"/>
    </location>
</feature>
<feature type="modified residue" description="Omega-N-methylarginine" evidence="3">
    <location>
        <position position="162"/>
    </location>
</feature>
<feature type="modified residue" description="Phosphoserine" evidence="56">
    <location>
        <position position="216"/>
    </location>
</feature>
<feature type="modified residue" description="Phosphoserine" evidence="58">
    <location>
        <position position="229"/>
    </location>
</feature>
<feature type="modified residue" description="N6-acetyllysine" evidence="3">
    <location>
        <position position="321"/>
    </location>
</feature>
<feature type="modified residue" description="Phosphoserine" evidence="3">
    <location>
        <position position="423"/>
    </location>
</feature>
<feature type="modified residue" description="Phosphoserine" evidence="53 59">
    <location>
        <position position="426"/>
    </location>
</feature>
<feature type="modified residue" description="N6-acetyllysine" evidence="54">
    <location>
        <position position="449"/>
    </location>
</feature>
<feature type="splice variant" id="VSP_022948" description="In isoform B." evidence="50 51">
    <original>MVAGMLGLR</original>
    <variation>MAAAAAAAPSGGGGGGEEERL</variation>
    <location>
        <begin position="1"/>
        <end position="9"/>
    </location>
</feature>
<feature type="sequence variant" id="VAR_018180" description="In RTT; dbSNP:rs61754421." evidence="37">
    <original>E</original>
    <variation>Q</variation>
    <location>
        <position position="10"/>
    </location>
</feature>
<feature type="sequence variant" id="VAR_018181" description="In dbSNP:rs61754445." evidence="16">
    <original>S</original>
    <variation>C</variation>
    <location>
        <position position="86"/>
    </location>
</feature>
<feature type="sequence variant" id="VAR_023552" description="In RTT; dbSNP:rs61754449." evidence="8">
    <original>D</original>
    <variation>E</variation>
    <location>
        <position position="97"/>
    </location>
</feature>
<feature type="sequence variant" id="VAR_018182" description="In RTT; dbSNP:rs61754448." evidence="23">
    <original>D</original>
    <variation>Y</variation>
    <location>
        <position position="97"/>
    </location>
</feature>
<feature type="sequence variant" id="VAR_023553" description="In RTT; dbSNP:rs61754451." evidence="39">
    <original>L</original>
    <variation>R</variation>
    <location>
        <position position="100"/>
    </location>
</feature>
<feature type="sequence variant" id="VAR_017462" description="In RTT; dbSNP:rs28935168." evidence="16 36 39">
    <original>L</original>
    <variation>V</variation>
    <location>
        <position position="100"/>
    </location>
</feature>
<feature type="sequence variant" id="VAR_018183" description="In RTT; dbSNP:rs61754453." evidence="9">
    <original>P</original>
    <variation>H</variation>
    <location>
        <position position="101"/>
    </location>
</feature>
<feature type="sequence variant" id="VAR_018184" description="In RTT; dbSNP:rs61754453." evidence="9">
    <original>P</original>
    <variation>L</variation>
    <location>
        <position position="101"/>
    </location>
</feature>
<feature type="sequence variant" id="VAR_010276" description="In RTT; also in a patient with Angelman syndrome and some typical RTT features; dbSNP:rs61754453." evidence="14 20">
    <original>P</original>
    <variation>R</variation>
    <location>
        <position position="101"/>
    </location>
</feature>
<feature type="sequence variant" id="VAR_023554" description="In RTT; dbSNP:rs61754452." evidence="19">
    <original>P</original>
    <variation>S</variation>
    <location>
        <position position="101"/>
    </location>
</feature>
<feature type="sequence variant" id="VAR_018185" description="In RTT; dbSNP:rs61754452." evidence="9">
    <original>P</original>
    <variation>T</variation>
    <location>
        <position position="101"/>
    </location>
</feature>
<feature type="sequence variant" id="VAR_018186" description="In RTT; dbSNP:rs61754457." evidence="10 16">
    <original>R</original>
    <variation>Q</variation>
    <location>
        <position position="106"/>
    </location>
</feature>
<feature type="sequence variant" id="VAR_010272" description="In RTT; dbSNP:rs28934907." evidence="6 7 8 9 13 14 16 18 19 23 25 39">
    <original>R</original>
    <variation>W</variation>
    <location>
        <position position="106"/>
    </location>
</feature>
<feature type="sequence variant" id="VAR_018187" description="In RTT; dbSNP:rs61754459." evidence="18">
    <original>R</original>
    <variation>G</variation>
    <location>
        <position position="111"/>
    </location>
</feature>
<feature type="sequence variant" id="VAR_023555" description="In RTT; dbSNP:rs267608454." evidence="22">
    <original>Y</original>
    <variation>D</variation>
    <location>
        <position position="120"/>
    </location>
</feature>
<feature type="sequence variant" id="VAR_010277" description="In RTT; dbSNP:rs61755763." evidence="13">
    <original>L</original>
    <variation>F</variation>
    <location>
        <position position="124"/>
    </location>
</feature>
<feature type="sequence variant" id="VAR_018188" description="In RTT; dbSNP:rs61748383." evidence="37">
    <original>Q</original>
    <variation>P</variation>
    <location>
        <position position="128"/>
    </location>
</feature>
<feature type="sequence variant" id="VAR_010273" description="In RTT; impairs interaction with ATRX and abolishes ATRX recruitment to heterochromatin; dbSNP:rs28934904." evidence="6 7 8 9 13 16 18 19 22 23 33 37 39 43 45 47">
    <original>R</original>
    <variation>C</variation>
    <location>
        <position position="133"/>
    </location>
</feature>
<feature type="sequence variant" id="VAR_018189" description="In RTT; dbSNP:rs61748389." evidence="23 24">
    <original>R</original>
    <variation>H</variation>
    <location>
        <position position="133"/>
    </location>
</feature>
<feature type="sequence variant" id="VAR_010278" description="In RTT; dbSNP:rs61748390." evidence="9 13 19 25">
    <original>S</original>
    <variation>C</variation>
    <location>
        <position position="134"/>
    </location>
</feature>
<feature type="sequence variant" id="VAR_018190" description="In RTT; dbSNP:rs61748391." evidence="18">
    <original>K</original>
    <variation>E</variation>
    <location>
        <position position="135"/>
    </location>
</feature>
<feature type="sequence variant" id="VAR_017581" description="In MRXS13; dbSNP:rs61748392." evidence="21">
    <original>E</original>
    <variation>G</variation>
    <location>
        <position position="137"/>
    </location>
</feature>
<feature type="sequence variant" id="VAR_010279" description="In MRXS13; impairs interaction with ATRX and abolishes ATRX recruitment to heterochromatin; dbSNP:rs28934908." evidence="15 21 26 27 30 31 43">
    <original>A</original>
    <variation>V</variation>
    <location>
        <position position="140"/>
    </location>
</feature>
<feature type="sequence variant" id="VAR_010280" description="In RTT; dbSNP:rs61748404." evidence="9 13 16 18 19 23 25 37 39">
    <original>P</original>
    <variation>R</variation>
    <location>
        <position position="152"/>
    </location>
</feature>
<feature type="sequence variant" id="VAR_023556" description="In RTT; dbSNP:rs61748406." evidence="8">
    <original>F</original>
    <variation>I</variation>
    <location>
        <position position="155"/>
    </location>
</feature>
<feature type="sequence variant" id="VAR_010274" description="In RTT; dbSNP:rs28934905." evidence="6 7 16">
    <original>F</original>
    <variation>S</variation>
    <location>
        <position position="155"/>
    </location>
</feature>
<feature type="sequence variant" id="VAR_018191" description="In RTT; dbSNP:rs61748407." evidence="18">
    <original>D</original>
    <variation>G</variation>
    <location>
        <position position="156"/>
    </location>
</feature>
<feature type="sequence variant" id="VAR_023557" description="In RTT; dbSNP:rs61748411." evidence="19 39">
    <original>T</original>
    <variation>A</variation>
    <location>
        <position position="158"/>
    </location>
</feature>
<feature type="sequence variant" id="VAR_010275" description="In RTT; dbSNP:rs28934906." evidence="6 7 8 9 10 11 13 14 16 18 19 22 23 25 33 37 39">
    <original>T</original>
    <variation>M</variation>
    <location>
        <position position="158"/>
    </location>
</feature>
<feature type="sequence variant" id="VAR_023558" description="In RTT; dbSNP:rs61748417." evidence="39">
    <original>G</original>
    <variation>V</variation>
    <location>
        <position position="161"/>
    </location>
</feature>
<feature type="sequence variant" id="VAR_018192" description="In MRXS13; dbSNP:rs61748420." evidence="21">
    <original>R</original>
    <variation>W</variation>
    <location>
        <position position="167"/>
    </location>
</feature>
<feature type="sequence variant" id="VAR_018193" description="In dbSNP:rs61749705." evidence="32">
    <original>A</original>
    <variation>V</variation>
    <location>
        <position position="181"/>
    </location>
</feature>
<feature type="sequence variant" id="VAR_018194" description="In dbSNP:rs61749713." evidence="29">
    <original>T</original>
    <variation>S</variation>
    <location>
        <position position="196"/>
    </location>
</feature>
<feature type="sequence variant" id="VAR_018195" description="In dbSNP:rs61749714." evidence="23 30">
    <original>T</original>
    <variation>M</variation>
    <location>
        <position position="197"/>
    </location>
</feature>
<feature type="sequence variant" id="VAR_010281" description="In dbSNP:rs61748381." evidence="11 25">
    <original>A</original>
    <variation>V</variation>
    <location>
        <position position="201"/>
    </location>
</feature>
<feature type="sequence variant" id="VAR_018196" description="In dbSNP:rs61749720." evidence="15 16">
    <original>T</original>
    <variation>M</variation>
    <location>
        <position position="203"/>
    </location>
</feature>
<feature type="sequence variant" id="VAR_018197" description="In RTT; dbSNP:rs61749730." evidence="18">
    <original>K</original>
    <variation>I</variation>
    <location>
        <position position="210"/>
    </location>
</feature>
<feature type="sequence variant" id="VAR_037664" description="In MRXS13; dbSNP:rs61749715." evidence="34">
    <original>P</original>
    <variation>L</variation>
    <location>
        <position position="225"/>
    </location>
</feature>
<feature type="sequence variant" id="VAR_018198" description="In RTT; dbSNP:rs61749715." evidence="9">
    <original>P</original>
    <variation>R</variation>
    <location>
        <position position="225"/>
    </location>
</feature>
<feature type="sequence variant" id="VAR_018199" description="In dbSNP:rs61749738." evidence="29">
    <original>T</original>
    <variation>S</variation>
    <location>
        <position position="228"/>
    </location>
</feature>
<feature type="sequence variant" id="VAR_018200" description="In dbSNP:rs61749739." evidence="9">
    <original>S</original>
    <variation>L</variation>
    <location>
        <position position="229"/>
    </location>
</feature>
<feature type="sequence variant" id="VAR_018201" description="In dbSNP:rs61748422." evidence="11">
    <original>G</original>
    <variation>A</variation>
    <location>
        <position position="232"/>
    </location>
</feature>
<feature type="sequence variant" id="VAR_018202" description="In dbSNP:rs61750229." evidence="11">
    <original>P</original>
    <variation>L</variation>
    <location>
        <position position="251"/>
    </location>
</feature>
<feature type="sequence variant" id="VAR_078720" description="In RTT." evidence="44 46">
    <location>
        <begin position="270"/>
        <end position="486"/>
    </location>
</feature>
<feature type="sequence variant" id="VAR_018203" description="In MRXS13; dbSNP:rs61750255." evidence="21">
    <original>K</original>
    <variation>E</variation>
    <location>
        <position position="284"/>
    </location>
</feature>
<feature type="sequence variant" id="VAR_018204" description="In dbSNP:rs61750257." evidence="16">
    <original>A</original>
    <variation>P</variation>
    <location>
        <position position="287"/>
    </location>
</feature>
<feature type="sequence variant" id="VAR_018205" description="In dbSNP:rs61751360." evidence="16">
    <original>S</original>
    <variation>A</variation>
    <location>
        <position position="291"/>
    </location>
</feature>
<feature type="sequence variant" id="VAR_018206" description="In RTT; dbSNP:rs61751373." evidence="25">
    <original>P</original>
    <variation>A</variation>
    <location>
        <position position="302"/>
    </location>
</feature>
<feature type="sequence variant" id="VAR_018207" description="In RTT; dbSNP:rs61749723." evidence="11">
    <original>P</original>
    <variation>H</variation>
    <location>
        <position position="302"/>
    </location>
</feature>
<feature type="sequence variant" id="VAR_018208" description="In RTT; dbSNP:rs61749723." evidence="9">
    <original>P</original>
    <variation>L</variation>
    <location>
        <position position="302"/>
    </location>
</feature>
<feature type="sequence variant" id="VAR_018209" description="In RTT; dbSNP:rs61749723." evidence="10 18">
    <original>P</original>
    <variation>R</variation>
    <location>
        <position position="302"/>
    </location>
</feature>
<feature type="sequence variant" id="VAR_078221" description="Found in a patient with drug-resistant epilepsy with intellectual disability, parkinsonism and other neurologic symptoms; likely pathogenic; dbSNP:rs1057519543." evidence="47">
    <original>K</original>
    <variation>N</variation>
    <location>
        <position position="305"/>
    </location>
</feature>
<feature type="sequence variant" id="VAR_018210" description="In RTT; abolishes interaction with TBL1X; dbSNP:rs61751441." evidence="16 23 48">
    <original>K</original>
    <variation>R</variation>
    <location>
        <position position="305"/>
    </location>
</feature>
<feature type="sequence variant" id="VAR_010282" description="In RTT; abolishes interaction with TBL1X and TBL1XR1; dbSNP:rs28935468." evidence="7 8 9 10 11 13 14 16 18 22 23 25 33 37 39 46 48">
    <original>R</original>
    <variation>C</variation>
    <location>
        <position position="306"/>
    </location>
</feature>
<feature type="sequence variant" id="VAR_018211" description="In RTT; dbSNP:rs61751443." evidence="9 16 39">
    <original>R</original>
    <variation>H</variation>
    <location>
        <position position="306"/>
    </location>
</feature>
<feature type="sequence variant" id="VAR_018212" description="In RTT; dbSNP:rs61751449." evidence="10 25">
    <original>P</original>
    <variation>A</variation>
    <location>
        <position position="322"/>
    </location>
</feature>
<feature type="sequence variant" id="VAR_018213" description="In RTT; dbSNP:rs61751450." evidence="23">
    <original>P</original>
    <variation>L</variation>
    <location>
        <position position="322"/>
    </location>
</feature>
<feature type="sequence variant" id="VAR_037665" description="In MRXS13; dbSNP:rs61751449." evidence="42">
    <original>P</original>
    <variation>S</variation>
    <location>
        <position position="322"/>
    </location>
</feature>
<feature type="sequence variant" id="VAR_018214" description="In RTT; dbSNP:rs61752361." evidence="30 49">
    <original>R</original>
    <variation>W</variation>
    <location>
        <position position="344"/>
    </location>
</feature>
<feature type="sequence variant" id="VAR_018215" description="In dbSNP:rs61752371." evidence="28">
    <original>S</original>
    <variation>P</variation>
    <location>
        <position position="359"/>
    </location>
</feature>
<feature type="sequence variant" id="VAR_018216" description="In dbSNP:rs61752387." evidence="11 30 32 33">
    <original>P</original>
    <variation>S</variation>
    <location>
        <position position="376"/>
    </location>
</feature>
<feature type="sequence variant" id="VAR_023559" description="In dbSNP:rs61753006.">
    <original>P</original>
    <variation>L</variation>
    <location>
        <position position="388"/>
    </location>
</feature>
<feature type="sequence variant" id="VAR_018218" description="In RTT; benign; dbSNP:rs61753000." evidence="33">
    <original>P</original>
    <variation>S</variation>
    <location>
        <position position="388"/>
    </location>
</feature>
<feature type="sequence variant" id="VAR_018217" description="In dbSNP:rs2065921248." evidence="32">
    <location>
        <position position="388"/>
    </location>
</feature>
<feature type="sequence variant" id="VAR_018219" description="In dbSNP:rs63094662." evidence="29">
    <original>E</original>
    <variation>K</variation>
    <location>
        <position position="394"/>
    </location>
</feature>
<feature type="sequence variant" id="VAR_010283" description="In dbSNP:rs56268439." evidence="7 14 16 25 28">
    <original>E</original>
    <variation>K</variation>
    <location>
        <position position="397"/>
    </location>
</feature>
<feature type="sequence variant" id="VAR_018220" description="In MRXS13; likely benign; dbSNP:rs62915962." evidence="21 30">
    <original>P</original>
    <variation>L</variation>
    <location>
        <position position="399"/>
    </location>
</feature>
<feature type="sequence variant" id="VAR_018221" description="In dbSNP:rs61753014." evidence="32">
    <original>P</original>
    <variation>L</variation>
    <location>
        <position position="402"/>
    </location>
</feature>
<feature type="sequence variant" id="VAR_018222" description="In dbSNP:rs61753966." evidence="16">
    <original>V</original>
    <variation>I</variation>
    <location>
        <position position="412"/>
    </location>
</feature>
<feature type="sequence variant" id="VAR_017463" description="In ENS-MECP2; uncertain significance; dbSNP:rs61753971." evidence="17 30">
    <original>G</original>
    <variation>S</variation>
    <location>
        <position position="428"/>
    </location>
</feature>
<feature type="sequence variant" id="VAR_018223" description="In dbSNP:rs61753973." evidence="9">
    <original>A</original>
    <variation>T</variation>
    <location>
        <position position="439"/>
    </location>
</feature>
<feature type="sequence variant" id="VAR_018224" description="In dbSNP:rs61753975." evidence="16">
    <original>A</original>
    <variation>T</variation>
    <location>
        <position position="444"/>
    </location>
</feature>
<feature type="sequence variant" id="VAR_018225" description="In MRXS13; dbSNP:rs61753980." evidence="21">
    <original>R</original>
    <variation>Q</variation>
    <location>
        <position position="453"/>
    </location>
</feature>
<feature type="sequence variant" id="VAR_018226" description="In dbSNP:rs267608636." evidence="29">
    <original>P</original>
    <variation>S</variation>
    <location>
        <position position="480"/>
    </location>
</feature>
<feature type="sequence conflict" description="In Ref. 10; CAA61599." evidence="52" ref="10">
    <original>PAVP</original>
    <variation>RLC</variation>
    <location>
        <begin position="72"/>
        <end position="75"/>
    </location>
</feature>
<feature type="sequence conflict" description="In Ref. 2; CAA68001." evidence="52" ref="2">
    <original>E</original>
    <variation>G</variation>
    <location>
        <position position="290"/>
    </location>
</feature>
<feature type="sequence conflict" description="In Ref. 7; CAD97991." evidence="52" ref="7">
    <original>M</original>
    <variation>V</variation>
    <location>
        <position position="466"/>
    </location>
</feature>
<feature type="turn" evidence="61">
    <location>
        <begin position="88"/>
        <end position="91"/>
    </location>
</feature>
<feature type="strand" evidence="60">
    <location>
        <begin position="95"/>
        <end position="97"/>
    </location>
</feature>
<feature type="strand" evidence="60">
    <location>
        <begin position="100"/>
        <end position="103"/>
    </location>
</feature>
<feature type="strand" evidence="62">
    <location>
        <begin position="105"/>
        <end position="110"/>
    </location>
</feature>
<feature type="turn" evidence="62">
    <location>
        <begin position="115"/>
        <end position="118"/>
    </location>
</feature>
<feature type="strand" evidence="62">
    <location>
        <begin position="120"/>
        <end position="125"/>
    </location>
</feature>
<feature type="turn" evidence="60">
    <location>
        <begin position="127"/>
        <end position="129"/>
    </location>
</feature>
<feature type="strand" evidence="60">
    <location>
        <begin position="130"/>
        <end position="134"/>
    </location>
</feature>
<feature type="helix" evidence="62">
    <location>
        <begin position="135"/>
        <end position="144"/>
    </location>
</feature>
<feature type="strand" evidence="64">
    <location>
        <begin position="148"/>
        <end position="150"/>
    </location>
</feature>
<feature type="helix" evidence="62">
    <location>
        <begin position="152"/>
        <end position="154"/>
    </location>
</feature>
<feature type="helix" evidence="63">
    <location>
        <begin position="158"/>
        <end position="160"/>
    </location>
</feature>
<feature type="strand" evidence="63">
    <location>
        <begin position="179"/>
        <end position="181"/>
    </location>
</feature>
<name>MECP2_HUMAN</name>
<comment type="function">
    <text evidence="3">Chromosomal protein that binds to methylated DNA. It can bind specifically to a single methyl-CpG pair. It is not influenced by sequences flanking the methyl-CpGs. Mediates transcriptional repression through interaction with histone deacetylase and the corepressor SIN3A. Binds both 5-methylcytosine (5mC) and 5-hydroxymethylcytosine (5hmC)-containing DNA, with a preference for 5-methylcytosine (5mC).</text>
</comment>
<comment type="subunit">
    <text evidence="3 40 48">Interacts with FNBP3 (By similarity). Interacts with CDKL5 (PubMed:15917271). Interacts with ATRX; MECP2 recruits ATRX to pericentric heterochromatin in neuronal cells (By similarity). Interacts with NCOR2 (By similarity). Interacts with TBL1XR1; bridges interaction between MECP2 and NCOR1 (PubMed:28348241). Interacts with TBL1X; recruits TBL1X to the heterochromatin foci (PubMed:28348241).</text>
</comment>
<comment type="interaction">
    <interactant intactId="EBI-1189067">
        <id>P51608</id>
    </interactant>
    <interactant intactId="EBI-22011868">
        <id>Q6PCB6</id>
        <label>ABHD17C</label>
    </interactant>
    <organismsDiffer>false</organismsDiffer>
    <experiments>3</experiments>
</comment>
<comment type="interaction">
    <interactant intactId="EBI-1189067">
        <id>P51608</id>
    </interactant>
    <interactant intactId="EBI-11529439">
        <id>P63010-2</id>
        <label>AP2B1</label>
    </interactant>
    <organismsDiffer>false</organismsDiffer>
    <experiments>3</experiments>
</comment>
<comment type="interaction">
    <interactant intactId="EBI-1189067">
        <id>P51608</id>
    </interactant>
    <interactant intactId="EBI-14199987">
        <id>Q9Y575-3</id>
        <label>ASB3</label>
    </interactant>
    <organismsDiffer>false</organismsDiffer>
    <experiments>3</experiments>
</comment>
<comment type="interaction">
    <interactant intactId="EBI-1189067">
        <id>P51608</id>
    </interactant>
    <interactant intactId="EBI-718459">
        <id>Q9UII2</id>
        <label>ATP5IF1</label>
    </interactant>
    <organismsDiffer>false</organismsDiffer>
    <experiments>3</experiments>
</comment>
<comment type="interaction">
    <interactant intactId="EBI-1189067">
        <id>P51608</id>
    </interactant>
    <interactant intactId="EBI-2837444">
        <id>Q8WUW1</id>
        <label>BRK1</label>
    </interactant>
    <organismsDiffer>false</organismsDiffer>
    <experiments>3</experiments>
</comment>
<comment type="interaction">
    <interactant intactId="EBI-1189067">
        <id>P51608</id>
    </interactant>
    <interactant intactId="EBI-350590">
        <id>Q9UNS2</id>
        <label>COPS3</label>
    </interactant>
    <organismsDiffer>false</organismsDiffer>
    <experiments>3</experiments>
</comment>
<comment type="interaction">
    <interactant intactId="EBI-1189067">
        <id>P51608</id>
    </interactant>
    <interactant intactId="EBI-491549">
        <id>P35222</id>
        <label>CTNNB1</label>
    </interactant>
    <organismsDiffer>false</organismsDiffer>
    <experiments>3</experiments>
</comment>
<comment type="interaction">
    <interactant intactId="EBI-1189067">
        <id>P51608</id>
    </interactant>
    <interactant intactId="EBI-1048143">
        <id>Q7L576</id>
        <label>CYFIP1</label>
    </interactant>
    <organismsDiffer>false</organismsDiffer>
    <experiments>3</experiments>
</comment>
<comment type="interaction">
    <interactant intactId="EBI-1189067">
        <id>P51608</id>
    </interactant>
    <interactant intactId="EBI-347658">
        <id>Q9UHI6</id>
        <label>DDX20</label>
    </interactant>
    <organismsDiffer>false</organismsDiffer>
    <experiments>3</experiments>
</comment>
<comment type="interaction">
    <interactant intactId="EBI-1189067">
        <id>P51608</id>
    </interactant>
    <interactant intactId="EBI-718185">
        <id>O75398</id>
        <label>DEAF1</label>
    </interactant>
    <organismsDiffer>false</organismsDiffer>
    <experiments>3</experiments>
</comment>
<comment type="interaction">
    <interactant intactId="EBI-1189067">
        <id>P51608</id>
    </interactant>
    <interactant intactId="EBI-9089567">
        <id>Q99504</id>
        <label>EYA3</label>
    </interactant>
    <organismsDiffer>false</organismsDiffer>
    <experiments>3</experiments>
</comment>
<comment type="interaction">
    <interactant intactId="EBI-1189067">
        <id>P51608</id>
    </interactant>
    <interactant intactId="EBI-10253815">
        <id>Q6PIV2</id>
        <label>FOXR1</label>
    </interactant>
    <organismsDiffer>false</organismsDiffer>
    <experiments>3</experiments>
</comment>
<comment type="interaction">
    <interactant intactId="EBI-1189067">
        <id>P51608</id>
    </interactant>
    <interactant intactId="EBI-348345">
        <id>Q9H2X6</id>
        <label>HIPK2</label>
    </interactant>
    <organismsDiffer>false</organismsDiffer>
    <experiments>2</experiments>
</comment>
<comment type="interaction">
    <interactant intactId="EBI-1189067">
        <id>P51608</id>
    </interactant>
    <interactant intactId="EBI-352682">
        <id>P04792</id>
        <label>HSPB1</label>
    </interactant>
    <organismsDiffer>false</organismsDiffer>
    <experiments>3</experiments>
</comment>
<comment type="interaction">
    <interactant intactId="EBI-1189067">
        <id>P51608</id>
    </interactant>
    <interactant intactId="EBI-466029">
        <id>P42858</id>
        <label>HTT</label>
    </interactant>
    <organismsDiffer>false</organismsDiffer>
    <experiments>18</experiments>
</comment>
<comment type="interaction">
    <interactant intactId="EBI-1189067">
        <id>P51608</id>
    </interactant>
    <interactant intactId="EBI-21911304">
        <id>Q6DN90-2</id>
        <label>IQSEC1</label>
    </interactant>
    <organismsDiffer>false</organismsDiffer>
    <experiments>3</experiments>
</comment>
<comment type="interaction">
    <interactant intactId="EBI-1189067">
        <id>P51608</id>
    </interactant>
    <interactant intactId="EBI-20795332">
        <id>Q92993-2</id>
        <label>KAT5</label>
    </interactant>
    <organismsDiffer>false</organismsDiffer>
    <experiments>3</experiments>
</comment>
<comment type="interaction">
    <interactant intactId="EBI-1189067">
        <id>P51608</id>
    </interactant>
    <interactant intactId="EBI-714379">
        <id>Q9Y2M5</id>
        <label>KLHL20</label>
    </interactant>
    <organismsDiffer>false</organismsDiffer>
    <experiments>4</experiments>
</comment>
<comment type="interaction">
    <interactant intactId="EBI-1189067">
        <id>P51608</id>
    </interactant>
    <interactant intactId="EBI-10261141">
        <id>Q8IUC2</id>
        <label>KRTAP8-1</label>
    </interactant>
    <organismsDiffer>false</organismsDiffer>
    <experiments>3</experiments>
</comment>
<comment type="interaction">
    <interactant intactId="EBI-1189067">
        <id>P51608</id>
    </interactant>
    <interactant intactId="EBI-79452">
        <id>P07948</id>
        <label>LYN</label>
    </interactant>
    <organismsDiffer>false</organismsDiffer>
    <experiments>3</experiments>
</comment>
<comment type="interaction">
    <interactant intactId="EBI-1189067">
        <id>P51608</id>
    </interactant>
    <interactant intactId="EBI-751711">
        <id>P61244</id>
        <label>MAX</label>
    </interactant>
    <organismsDiffer>false</organismsDiffer>
    <experiments>2</experiments>
</comment>
<comment type="interaction">
    <interactant intactId="EBI-1189067">
        <id>P51608</id>
    </interactant>
    <interactant intactId="EBI-4397720">
        <id>Q8TDB4</id>
        <label>MGARP</label>
    </interactant>
    <organismsDiffer>false</organismsDiffer>
    <experiments>3</experiments>
</comment>
<comment type="interaction">
    <interactant intactId="EBI-1189067">
        <id>P51608</id>
    </interactant>
    <interactant intactId="EBI-25844576">
        <id>O43196-2</id>
        <label>MSH5</label>
    </interactant>
    <organismsDiffer>false</organismsDiffer>
    <experiments>3</experiments>
</comment>
<comment type="interaction">
    <interactant intactId="EBI-1189067">
        <id>P51608</id>
    </interactant>
    <interactant intactId="EBI-8645631">
        <id>Q99457</id>
        <label>NAP1L3</label>
    </interactant>
    <organismsDiffer>false</organismsDiffer>
    <experiments>3</experiments>
</comment>
<comment type="interaction">
    <interactant intactId="EBI-1189067">
        <id>P51608</id>
    </interactant>
    <interactant intactId="EBI-475646">
        <id>P07196</id>
        <label>NEFL</label>
    </interactant>
    <organismsDiffer>false</organismsDiffer>
    <experiments>3</experiments>
</comment>
<comment type="interaction">
    <interactant intactId="EBI-1189067">
        <id>P51608</id>
    </interactant>
    <interactant intactId="EBI-748974">
        <id>Q96CV9</id>
        <label>OPTN</label>
    </interactant>
    <organismsDiffer>false</organismsDiffer>
    <experiments>3</experiments>
</comment>
<comment type="interaction">
    <interactant intactId="EBI-1189067">
        <id>P51608</id>
    </interactant>
    <interactant intactId="EBI-1058491">
        <id>Q96FW1</id>
        <label>OTUB1</label>
    </interactant>
    <organismsDiffer>false</organismsDiffer>
    <experiments>3</experiments>
</comment>
<comment type="interaction">
    <interactant intactId="EBI-1189067">
        <id>P51608</id>
    </interactant>
    <interactant intactId="EBI-25830200">
        <id>Q6GQQ9-2</id>
        <label>OTUD7B</label>
    </interactant>
    <organismsDiffer>false</organismsDiffer>
    <experiments>3</experiments>
</comment>
<comment type="interaction">
    <interactant intactId="EBI-1189067">
        <id>P51608</id>
    </interactant>
    <interactant intactId="EBI-629434">
        <id>O75925</id>
        <label>PIAS1</label>
    </interactant>
    <organismsDiffer>false</organismsDiffer>
    <experiments>3</experiments>
</comment>
<comment type="interaction">
    <interactant intactId="EBI-1189067">
        <id>P51608</id>
    </interactant>
    <interactant intactId="EBI-749195">
        <id>P60891</id>
        <label>PRPS1</label>
    </interactant>
    <organismsDiffer>false</organismsDiffer>
    <experiments>3</experiments>
</comment>
<comment type="interaction">
    <interactant intactId="EBI-1189067">
        <id>P51608</id>
    </interactant>
    <interactant intactId="EBI-6552718">
        <id>P57729</id>
        <label>RAB38</label>
    </interactant>
    <organismsDiffer>false</organismsDiffer>
    <experiments>3</experiments>
</comment>
<comment type="interaction">
    <interactant intactId="EBI-1189067">
        <id>P51608</id>
    </interactant>
    <interactant intactId="EBI-438710">
        <id>Q9NS23-4</id>
        <label>RASSF1</label>
    </interactant>
    <organismsDiffer>false</organismsDiffer>
    <experiments>3</experiments>
</comment>
<comment type="interaction">
    <interactant intactId="EBI-1189067">
        <id>P51608</id>
    </interactant>
    <interactant intactId="EBI-960502">
        <id>Q8WWW0-2</id>
        <label>RASSF5</label>
    </interactant>
    <organismsDiffer>false</organismsDiffer>
    <experiments>3</experiments>
</comment>
<comment type="interaction">
    <interactant intactId="EBI-1189067">
        <id>P51608</id>
    </interactant>
    <interactant intactId="EBI-25829984">
        <id>Q9ULX5</id>
        <label>RNF112</label>
    </interactant>
    <organismsDiffer>false</organismsDiffer>
    <experiments>3</experiments>
</comment>
<comment type="interaction">
    <interactant intactId="EBI-1189067">
        <id>P51608</id>
    </interactant>
    <interactant intactId="EBI-743938">
        <id>Q96D59</id>
        <label>RNF183</label>
    </interactant>
    <organismsDiffer>false</organismsDiffer>
    <experiments>3</experiments>
</comment>
<comment type="interaction">
    <interactant intactId="EBI-1189067">
        <id>P51608</id>
    </interactant>
    <interactant intactId="EBI-347218">
        <id>Q96ST3</id>
        <label>SIN3A</label>
    </interactant>
    <organismsDiffer>false</organismsDiffer>
    <experiments>2</experiments>
</comment>
<comment type="interaction">
    <interactant intactId="EBI-1189067">
        <id>P51608</id>
    </interactant>
    <interactant intactId="EBI-679562">
        <id>P51531</id>
        <label>SMARCA2</label>
    </interactant>
    <organismsDiffer>false</organismsDiffer>
    <experiments>4</experiments>
</comment>
<comment type="interaction">
    <interactant intactId="EBI-1189067">
        <id>P51608</id>
    </interactant>
    <interactant intactId="EBI-358419">
        <id>Q12824</id>
        <label>SMARCB1</label>
    </interactant>
    <organismsDiffer>false</organismsDiffer>
    <experiments>3</experiments>
</comment>
<comment type="interaction">
    <interactant intactId="EBI-1189067">
        <id>P51608</id>
    </interactant>
    <interactant intactId="EBI-395447">
        <id>Q16637-3</id>
        <label>SMN2</label>
    </interactant>
    <organismsDiffer>false</organismsDiffer>
    <experiments>3</experiments>
</comment>
<comment type="interaction">
    <interactant intactId="EBI-1189067">
        <id>P51608</id>
    </interactant>
    <interactant intactId="EBI-10696971">
        <id>Q7Z6I5</id>
        <label>SPATA12</label>
    </interactant>
    <organismsDiffer>false</organismsDiffer>
    <experiments>3</experiments>
</comment>
<comment type="interaction">
    <interactant intactId="EBI-1189067">
        <id>P51608</id>
    </interactant>
    <interactant intactId="EBI-714135">
        <id>O75558</id>
        <label>STX11</label>
    </interactant>
    <organismsDiffer>false</organismsDiffer>
    <experiments>3</experiments>
</comment>
<comment type="interaction">
    <interactant intactId="EBI-1189067">
        <id>P51608</id>
    </interactant>
    <interactant intactId="EBI-80140">
        <id>P63165</id>
        <label>SUMO1</label>
    </interactant>
    <organismsDiffer>false</organismsDiffer>
    <experiments>2</experiments>
</comment>
<comment type="interaction">
    <interactant intactId="EBI-1189067">
        <id>P51608</id>
    </interactant>
    <interactant intactId="EBI-11525489">
        <id>Q86WT6-2</id>
        <label>TRIM69</label>
    </interactant>
    <organismsDiffer>false</organismsDiffer>
    <experiments>3</experiments>
</comment>
<comment type="interaction">
    <interactant intactId="EBI-1189067">
        <id>P51608</id>
    </interactant>
    <interactant intactId="EBI-10259086">
        <id>Q86UV6-2</id>
        <label>TRIM74</label>
    </interactant>
    <organismsDiffer>false</organismsDiffer>
    <experiments>3</experiments>
</comment>
<comment type="interaction">
    <interactant intactId="EBI-1189067">
        <id>P51608</id>
    </interactant>
    <interactant intactId="EBI-594644">
        <id>P10599</id>
        <label>TXN</label>
    </interactant>
    <organismsDiffer>false</organismsDiffer>
    <experiments>3</experiments>
</comment>
<comment type="interaction">
    <interactant intactId="EBI-1189067">
        <id>P51608</id>
    </interactant>
    <interactant intactId="EBI-720609">
        <id>O76024</id>
        <label>WFS1</label>
    </interactant>
    <organismsDiffer>false</organismsDiffer>
    <experiments>3</experiments>
</comment>
<comment type="interaction">
    <interactant intactId="EBI-1189067">
        <id>P51608</id>
    </interactant>
    <interactant intactId="EBI-366905">
        <id>Q9QZR5</id>
        <label>Hipk2</label>
    </interactant>
    <organismsDiffer>true</organismsDiffer>
    <experiments>3</experiments>
</comment>
<comment type="interaction">
    <interactant intactId="EBI-1189067">
        <id>P51608</id>
    </interactant>
    <interactant intactId="EBI-349004">
        <id>Q60974</id>
        <label>Ncor1</label>
    </interactant>
    <organismsDiffer>true</organismsDiffer>
    <experiments>4</experiments>
</comment>
<comment type="interaction">
    <interactant intactId="EBI-1189067">
        <id>P51608</id>
    </interactant>
    <interactant intactId="EBI-6673326">
        <id>Q9WU42</id>
        <label>Ncor2</label>
    </interactant>
    <organismsDiffer>true</organismsDiffer>
    <experiments>4</experiments>
</comment>
<comment type="interaction">
    <interactant intactId="EBI-1189067">
        <id>P51608</id>
    </interactant>
    <interactant intactId="EBI-8821270">
        <id>Q9QXE7</id>
        <label>Tbl1x</label>
    </interactant>
    <organismsDiffer>true</organismsDiffer>
    <experiments>3</experiments>
</comment>
<comment type="interaction">
    <interactant intactId="EBI-1189067">
        <id>P51608</id>
    </interactant>
    <interactant intactId="EBI-1216384">
        <id>Q8BHJ5</id>
        <label>Tbl1xr1</label>
    </interactant>
    <organismsDiffer>true</organismsDiffer>
    <experiments>4</experiments>
</comment>
<comment type="interaction">
    <interactant intactId="EBI-26687319">
        <id>P51608-1</id>
    </interactant>
    <interactant intactId="EBI-995154">
        <id>O88508</id>
        <label>Dnmt3a</label>
    </interactant>
    <organismsDiffer>true</organismsDiffer>
    <experiments>10</experiments>
</comment>
<comment type="subcellular location">
    <subcellularLocation>
        <location evidence="3">Nucleus</location>
    </subcellularLocation>
    <text evidence="48">Colocalized with methyl-CpG in the genome. Colocalized with TBL1X to the heterochromatin foci.</text>
</comment>
<comment type="alternative products">
    <event type="alternative splicing"/>
    <isoform>
        <id>P51608-1</id>
        <name>A</name>
        <name>Beta</name>
        <sequence type="displayed"/>
    </isoform>
    <isoform>
        <id>P51608-2</id>
        <name>B</name>
        <name>Alpha</name>
        <sequence type="described" ref="VSP_022948"/>
    </isoform>
</comment>
<comment type="tissue specificity">
    <text>Present in all adult somatic tissues tested.</text>
</comment>
<comment type="PTM">
    <text evidence="1">Phosphorylated on Ser-423 in brain upon synaptic activity, which attenuates its repressor activity and seems to regulate dendritic growth and spine maturation.</text>
</comment>
<comment type="disease" evidence="20">
    <disease id="DI-00121">
        <name>Angelman syndrome</name>
        <acronym>AS</acronym>
        <description>A neurodevelopmental disorder characterized by severe motor and intellectual retardation, ataxia, frequent jerky limb movements and flapping of the arms and hands, hypotonia, seizures, absence of speech, frequent smiling and episodes of paroxysmal laughter, open-mouthed expression revealing the tongue.</description>
        <dbReference type="MIM" id="105830"/>
    </disease>
    <text>The disease may be caused by variants affecting the gene represented in this entry.</text>
</comment>
<comment type="disease" evidence="12 15 21 26 27 30 31 34 42 43">
    <disease id="DI-00722">
        <name>Intellectual developmental disorder, X-linked, syndromic 13</name>
        <acronym>MRXS13</acronym>
        <description>A disorder characterized by significantly below average general intellectual functioning associated with impairments in adaptive behavior and manifested during the developmental period. MRXS13 patients manifest intellectual disability associated with other variable features such as spasticity, episodes of manic depressive psychosis, increased tone and macroorchidism.</description>
        <dbReference type="MIM" id="300055"/>
    </disease>
    <text>The disease is caused by variants affecting the gene represented in this entry.</text>
</comment>
<comment type="disease" evidence="6 7 8 9 10 11 13 14 16 18 19 20 22 23 24 25 30 33 36 37 38 39 43 44 45 46 47 48 49">
    <disease id="DI-00999">
        <name>Rett syndrome</name>
        <acronym>RTT</acronym>
        <description>An X-linked dominant neurodevelopmental disorder, and one of the most common causes of intellectual disability in females. Patients appear to develop normally until 6 to 18 months of age, then gradually lose speech and purposeful hand movements, and develop microcephaly, seizures, autism, ataxia, intellectual disability and stereotypic hand movements. After initial regression, the condition stabilizes and patients usually survive into adulthood.</description>
        <dbReference type="MIM" id="312750"/>
    </disease>
    <text>The disease is caused by variants affecting the gene represented in this entry.</text>
</comment>
<comment type="disease" evidence="35">
    <disease id="DI-02433">
        <name>Autism, X-linked 3</name>
        <acronym>AUTSX3</acronym>
        <description>A complex multifactorial, pervasive developmental disorder characterized by impairments in reciprocal social interaction and communication, restricted and stereotyped patterns of interests and activities, and the presence of developmental abnormalities by 3 years of age. Most individuals with autism also manifest moderate intellectual disability.</description>
        <dbReference type="MIM" id="300496"/>
    </disease>
    <text>The disease may be caused by variants affecting the gene represented in this entry.</text>
</comment>
<comment type="disease" evidence="17">
    <disease id="DI-02038">
        <name>Encephalopathy, neonatal severe, due to MECP2 mutations</name>
        <acronym>ENS-MECP2</acronym>
        <description>A neurodevelopmental disorder characterized by severe neonatal encephalopathy, developmental delay, intellectual disability, microcephaly, seizures. Additional features include respiratory insufficiency and central hypoventilation, gastroesophageal reflux, axial hypotonia, hyperreflexia and dyskinetic movements.</description>
        <dbReference type="MIM" id="300673"/>
    </disease>
    <text>The disease is caused by variants affecting the gene represented in this entry. The MECP2 gene is mutated in Rett syndrome, a severe neurodevelopmental disorder that almost always occurs in females. Although it was first thought that MECP2 mutations causing Rett syndrome were lethal in males, later reports identified a severe neonatal encephalopathy in surviving male sibs of patients with Rett syndrome. Additional reports have confirmed a severe phenotype in males with Rett syndrome-associated MECP2 mutations.</text>
</comment>
<comment type="disease" evidence="41">
    <disease id="DI-02752">
        <name>Intellectual developmental disorder, X-linked, syndromic, Lubs type</name>
        <acronym>MRXSL</acronym>
        <description>A disorder characterized by significantly below average general intellectual functioning associated with impairments in adaptive behavior and manifested during the developmental period. MRXSL patients manifest intellectual disability associated with variable features. They include swallowing dysfunction and gastroesophageal reflux with secondary recurrent respiratory infections, hypotonia, mild myopathy and characteristic facies such as downslanting palpebral fissures, hypertelorism and a short nose with a low nasal bridge.</description>
        <dbReference type="MIM" id="300260"/>
    </disease>
    <text>The disease is caused by variants affecting the gene represented in this entry. Increased dosage of MECP2 due to gene duplication appears to be responsible for the intellectual disability phenotype.</text>
</comment>
<comment type="miscellaneous">
    <molecule>Isoform B</molecule>
    <text evidence="52">Ten times higher expression levels than isoform A in brain.</text>
</comment>
<comment type="sequence caution" evidence="52">
    <conflict type="erroneous initiation">
        <sequence resource="EMBL-CDS" id="CAD97991"/>
    </conflict>
    <text>Truncated N-terminus.</text>
</comment>
<gene>
    <name type="primary">MECP2</name>
</gene>
<protein>
    <recommendedName>
        <fullName>Methyl-CpG-binding protein 2</fullName>
        <shortName>MeCp-2 protein</shortName>
        <shortName>MeCp2</shortName>
    </recommendedName>
</protein>
<dbReference type="EMBL" id="L37298">
    <property type="protein sequence ID" value="AAC32737.1"/>
    <property type="molecule type" value="mRNA"/>
</dbReference>
<dbReference type="EMBL" id="X99686">
    <property type="protein sequence ID" value="CAA68001.1"/>
    <property type="molecule type" value="mRNA"/>
</dbReference>
<dbReference type="EMBL" id="AJ132917">
    <property type="protein sequence ID" value="CAB46446.1"/>
    <property type="molecule type" value="mRNA"/>
</dbReference>
<dbReference type="EMBL" id="AF158180">
    <property type="protein sequence ID" value="AAF33023.1"/>
    <property type="molecule type" value="mRNA"/>
</dbReference>
<dbReference type="EMBL" id="Y12643">
    <property type="protein sequence ID" value="CAA73190.1"/>
    <property type="molecule type" value="mRNA"/>
</dbReference>
<dbReference type="EMBL" id="AY541280">
    <property type="protein sequence ID" value="AAS55455.1"/>
    <property type="molecule type" value="mRNA"/>
</dbReference>
<dbReference type="EMBL" id="BX538060">
    <property type="protein sequence ID" value="CAD97991.1"/>
    <property type="status" value="ALT_INIT"/>
    <property type="molecule type" value="mRNA"/>
</dbReference>
<dbReference type="EMBL" id="AF030876">
    <property type="protein sequence ID" value="AAC08757.1"/>
    <property type="molecule type" value="Genomic_DNA"/>
</dbReference>
<dbReference type="EMBL" id="BC011612">
    <property type="protein sequence ID" value="AAH11612.1"/>
    <property type="molecule type" value="mRNA"/>
</dbReference>
<dbReference type="EMBL" id="X89430">
    <property type="protein sequence ID" value="CAA61599.1"/>
    <property type="molecule type" value="mRNA"/>
</dbReference>
<dbReference type="EMBL" id="X94628">
    <property type="protein sequence ID" value="CAA64331.1"/>
    <property type="molecule type" value="Genomic_DNA"/>
</dbReference>
<dbReference type="CCDS" id="CCDS14741.1">
    <molecule id="P51608-1"/>
</dbReference>
<dbReference type="CCDS" id="CCDS48193.1">
    <molecule id="P51608-2"/>
</dbReference>
<dbReference type="RefSeq" id="NP_001104262.1">
    <molecule id="P51608-2"/>
    <property type="nucleotide sequence ID" value="NM_001110792.2"/>
</dbReference>
<dbReference type="RefSeq" id="NP_001303266.1">
    <property type="nucleotide sequence ID" value="NM_001316337.1"/>
</dbReference>
<dbReference type="RefSeq" id="NP_004983.1">
    <molecule id="P51608-1"/>
    <property type="nucleotide sequence ID" value="NM_004992.4"/>
</dbReference>
<dbReference type="RefSeq" id="XP_047298071.1">
    <molecule id="P51608-1"/>
    <property type="nucleotide sequence ID" value="XM_047442115.1"/>
</dbReference>
<dbReference type="RefSeq" id="XP_047298072.1">
    <molecule id="P51608-1"/>
    <property type="nucleotide sequence ID" value="XM_047442116.1"/>
</dbReference>
<dbReference type="RefSeq" id="XP_054183066.1">
    <molecule id="P51608-1"/>
    <property type="nucleotide sequence ID" value="XM_054327091.1"/>
</dbReference>
<dbReference type="RefSeq" id="XP_054183067.1">
    <molecule id="P51608-1"/>
    <property type="nucleotide sequence ID" value="XM_054327092.1"/>
</dbReference>
<dbReference type="PDB" id="1QK9">
    <property type="method" value="NMR"/>
    <property type="chains" value="A=77-166"/>
</dbReference>
<dbReference type="PDB" id="3C2I">
    <property type="method" value="X-ray"/>
    <property type="resolution" value="2.50 A"/>
    <property type="chains" value="A=77-167"/>
</dbReference>
<dbReference type="PDB" id="5BT2">
    <property type="method" value="X-ray"/>
    <property type="resolution" value="2.20 A"/>
    <property type="chains" value="A=77-167"/>
</dbReference>
<dbReference type="PDB" id="6C1Y">
    <property type="method" value="X-ray"/>
    <property type="resolution" value="2.30 A"/>
    <property type="chains" value="A/B=80-164"/>
</dbReference>
<dbReference type="PDB" id="6OGJ">
    <property type="method" value="X-ray"/>
    <property type="resolution" value="1.80 A"/>
    <property type="chains" value="A/B=77-166"/>
</dbReference>
<dbReference type="PDB" id="6OGK">
    <property type="method" value="X-ray"/>
    <property type="resolution" value="1.65 A"/>
    <property type="chains" value="A=77-167"/>
</dbReference>
<dbReference type="PDB" id="6YWW">
    <property type="method" value="X-ray"/>
    <property type="resolution" value="2.10 A"/>
    <property type="chains" value="A=77-161"/>
</dbReference>
<dbReference type="PDB" id="8AJR">
    <property type="method" value="NMR"/>
    <property type="chains" value="A=89-181"/>
</dbReference>
<dbReference type="PDB" id="8ALQ">
    <property type="method" value="NMR"/>
    <property type="chains" value="A=89-181"/>
</dbReference>
<dbReference type="PDBsum" id="1QK9"/>
<dbReference type="PDBsum" id="3C2I"/>
<dbReference type="PDBsum" id="5BT2"/>
<dbReference type="PDBsum" id="6C1Y"/>
<dbReference type="PDBsum" id="6OGJ"/>
<dbReference type="PDBsum" id="6OGK"/>
<dbReference type="PDBsum" id="6YWW"/>
<dbReference type="PDBsum" id="8AJR"/>
<dbReference type="PDBsum" id="8ALQ"/>
<dbReference type="BMRB" id="P51608"/>
<dbReference type="SMR" id="P51608"/>
<dbReference type="BioGRID" id="110368">
    <property type="interactions" value="1279"/>
</dbReference>
<dbReference type="CORUM" id="P51608"/>
<dbReference type="DIP" id="DIP-39983N"/>
<dbReference type="FunCoup" id="P51608">
    <property type="interactions" value="855"/>
</dbReference>
<dbReference type="IntAct" id="P51608">
    <property type="interactions" value="206"/>
</dbReference>
<dbReference type="MINT" id="P51608"/>
<dbReference type="STRING" id="9606.ENSP00000395535"/>
<dbReference type="BindingDB" id="P51608"/>
<dbReference type="ChEMBL" id="CHEMBL3638346"/>
<dbReference type="GlyCosmos" id="P51608">
    <property type="glycosylation" value="2 sites, 1 glycan"/>
</dbReference>
<dbReference type="GlyGen" id="P51608">
    <property type="glycosylation" value="8 sites, 1 O-linked glycan (8 sites)"/>
</dbReference>
<dbReference type="iPTMnet" id="P51608"/>
<dbReference type="MetOSite" id="P51608"/>
<dbReference type="PhosphoSitePlus" id="P51608"/>
<dbReference type="BioMuta" id="MECP2"/>
<dbReference type="DMDM" id="1708973"/>
<dbReference type="jPOST" id="P51608"/>
<dbReference type="MassIVE" id="P51608"/>
<dbReference type="PaxDb" id="9606-ENSP00000395535"/>
<dbReference type="PeptideAtlas" id="P51608"/>
<dbReference type="ProteomicsDB" id="56344">
    <molecule id="P51608-1"/>
</dbReference>
<dbReference type="ProteomicsDB" id="56345">
    <molecule id="P51608-2"/>
</dbReference>
<dbReference type="Pumba" id="P51608"/>
<dbReference type="ABCD" id="P51608">
    <property type="antibodies" value="1 sequenced antibody"/>
</dbReference>
<dbReference type="Antibodypedia" id="394">
    <property type="antibodies" value="896 antibodies from 47 providers"/>
</dbReference>
<dbReference type="DNASU" id="4204"/>
<dbReference type="Ensembl" id="ENST00000303391.11">
    <molecule id="P51608-1"/>
    <property type="protein sequence ID" value="ENSP00000301948.6"/>
    <property type="gene ID" value="ENSG00000169057.26"/>
</dbReference>
<dbReference type="Ensembl" id="ENST00000453960.7">
    <molecule id="P51608-2"/>
    <property type="protein sequence ID" value="ENSP00000395535.2"/>
    <property type="gene ID" value="ENSG00000169057.26"/>
</dbReference>
<dbReference type="Ensembl" id="ENST00000630151.3">
    <molecule id="P51608-1"/>
    <property type="protein sequence ID" value="ENSP00000486089.2"/>
    <property type="gene ID" value="ENSG00000169057.26"/>
</dbReference>
<dbReference type="GeneID" id="4204"/>
<dbReference type="KEGG" id="hsa:4204"/>
<dbReference type="MANE-Select" id="ENST00000453960.7">
    <molecule id="P51608-2"/>
    <property type="protein sequence ID" value="ENSP00000395535.2"/>
    <property type="RefSeq nucleotide sequence ID" value="NM_001110792.2"/>
    <property type="RefSeq protein sequence ID" value="NP_001104262.1"/>
</dbReference>
<dbReference type="UCSC" id="uc004fjv.3">
    <molecule id="P51608-1"/>
    <property type="organism name" value="human"/>
</dbReference>
<dbReference type="AGR" id="HGNC:6990"/>
<dbReference type="CTD" id="4204"/>
<dbReference type="DisGeNET" id="4204"/>
<dbReference type="GeneCards" id="MECP2"/>
<dbReference type="GeneReviews" id="MECP2"/>
<dbReference type="HGNC" id="HGNC:6990">
    <property type="gene designation" value="MECP2"/>
</dbReference>
<dbReference type="HPA" id="ENSG00000169057">
    <property type="expression patterns" value="Low tissue specificity"/>
</dbReference>
<dbReference type="MalaCards" id="MECP2"/>
<dbReference type="MIM" id="105830">
    <property type="type" value="phenotype"/>
</dbReference>
<dbReference type="MIM" id="300005">
    <property type="type" value="gene"/>
</dbReference>
<dbReference type="MIM" id="300055">
    <property type="type" value="phenotype"/>
</dbReference>
<dbReference type="MIM" id="300260">
    <property type="type" value="phenotype"/>
</dbReference>
<dbReference type="MIM" id="300496">
    <property type="type" value="phenotype"/>
</dbReference>
<dbReference type="MIM" id="300673">
    <property type="type" value="phenotype"/>
</dbReference>
<dbReference type="MIM" id="312750">
    <property type="type" value="phenotype"/>
</dbReference>
<dbReference type="neXtProt" id="NX_P51608"/>
<dbReference type="OpenTargets" id="ENSG00000169057"/>
<dbReference type="Orphanet" id="3095">
    <property type="disease" value="Atypical Rett syndrome"/>
</dbReference>
<dbReference type="Orphanet" id="209370">
    <property type="disease" value="MECP2-related severe neonatal encephalopathy"/>
</dbReference>
<dbReference type="Orphanet" id="1762">
    <property type="disease" value="Proximal Xq28 duplication syndrome"/>
</dbReference>
<dbReference type="Orphanet" id="778">
    <property type="disease" value="Rett syndrome"/>
</dbReference>
<dbReference type="Orphanet" id="536">
    <property type="disease" value="Systemic lupus erythematosus"/>
</dbReference>
<dbReference type="Orphanet" id="3077">
    <property type="disease" value="X-linked intellectual disability-psychosis-macroorchidism syndrome"/>
</dbReference>
<dbReference type="Orphanet" id="777">
    <property type="disease" value="X-linked non-syndromic intellectual disability"/>
</dbReference>
<dbReference type="PharmGKB" id="PA30729"/>
<dbReference type="VEuPathDB" id="HostDB:ENSG00000169057"/>
<dbReference type="eggNOG" id="KOG4161">
    <property type="taxonomic scope" value="Eukaryota"/>
</dbReference>
<dbReference type="GeneTree" id="ENSGT00530000063687"/>
<dbReference type="HOGENOM" id="CLU_045066_0_0_1"/>
<dbReference type="InParanoid" id="P51608"/>
<dbReference type="OMA" id="PADKCRN"/>
<dbReference type="OrthoDB" id="10072024at2759"/>
<dbReference type="PAN-GO" id="P51608">
    <property type="GO annotations" value="6 GO annotations based on evolutionary models"/>
</dbReference>
<dbReference type="PhylomeDB" id="P51608"/>
<dbReference type="TreeFam" id="TF332974"/>
<dbReference type="PathwayCommons" id="P51608"/>
<dbReference type="Reactome" id="R-HSA-8986944">
    <property type="pathway name" value="Transcriptional Regulation by MECP2"/>
</dbReference>
<dbReference type="Reactome" id="R-HSA-9022534">
    <property type="pathway name" value="Loss of MECP2 binding ability to 5hmC-DNA"/>
</dbReference>
<dbReference type="Reactome" id="R-HSA-9022535">
    <property type="pathway name" value="Loss of phosphorylation of MECP2 at T308"/>
</dbReference>
<dbReference type="Reactome" id="R-HSA-9022537">
    <property type="pathway name" value="Loss of MECP2 binding ability to the NCoR/SMRT complex"/>
</dbReference>
<dbReference type="Reactome" id="R-HSA-9022538">
    <property type="pathway name" value="Loss of MECP2 binding ability to 5mC-DNA"/>
</dbReference>
<dbReference type="Reactome" id="R-HSA-9022692">
    <property type="pathway name" value="Regulation of MECP2 expression and activity"/>
</dbReference>
<dbReference type="Reactome" id="R-HSA-9022699">
    <property type="pathway name" value="MECP2 regulates neuronal receptors and channels"/>
</dbReference>
<dbReference type="Reactome" id="R-HSA-9022702">
    <property type="pathway name" value="MECP2 regulates transcription of neuronal ligands"/>
</dbReference>
<dbReference type="Reactome" id="R-HSA-9022707">
    <property type="pathway name" value="MECP2 regulates transcription factors"/>
</dbReference>
<dbReference type="Reactome" id="R-HSA-9022927">
    <property type="pathway name" value="MECP2 regulates transcription of genes involved in GABA signaling"/>
</dbReference>
<dbReference type="Reactome" id="R-HSA-9725371">
    <property type="pathway name" value="Nuclear events stimulated by ALK signaling in cancer"/>
</dbReference>
<dbReference type="SignaLink" id="P51608"/>
<dbReference type="SIGNOR" id="P51608"/>
<dbReference type="BioGRID-ORCS" id="4204">
    <property type="hits" value="9 hits in 796 CRISPR screens"/>
</dbReference>
<dbReference type="ChiTaRS" id="MECP2">
    <property type="organism name" value="human"/>
</dbReference>
<dbReference type="EvolutionaryTrace" id="P51608"/>
<dbReference type="GeneWiki" id="MECP2"/>
<dbReference type="GenomeRNAi" id="4204"/>
<dbReference type="Pharos" id="P51608">
    <property type="development level" value="Tchem"/>
</dbReference>
<dbReference type="PRO" id="PR:P51608"/>
<dbReference type="Proteomes" id="UP000005640">
    <property type="component" value="Chromosome X"/>
</dbReference>
<dbReference type="RNAct" id="P51608">
    <property type="molecule type" value="protein"/>
</dbReference>
<dbReference type="Bgee" id="ENSG00000169057">
    <property type="expression patterns" value="Expressed in paraflocculus and 186 other cell types or tissues"/>
</dbReference>
<dbReference type="ExpressionAtlas" id="P51608">
    <property type="expression patterns" value="baseline and differential"/>
</dbReference>
<dbReference type="GO" id="GO:0005813">
    <property type="term" value="C:centrosome"/>
    <property type="evidence" value="ECO:0000315"/>
    <property type="project" value="CAFA"/>
</dbReference>
<dbReference type="GO" id="GO:0005829">
    <property type="term" value="C:cytosol"/>
    <property type="evidence" value="ECO:0007669"/>
    <property type="project" value="Ensembl"/>
</dbReference>
<dbReference type="GO" id="GO:0005615">
    <property type="term" value="C:extracellular space"/>
    <property type="evidence" value="ECO:0007005"/>
    <property type="project" value="UniProtKB"/>
</dbReference>
<dbReference type="GO" id="GO:0000792">
    <property type="term" value="C:heterochromatin"/>
    <property type="evidence" value="ECO:0000314"/>
    <property type="project" value="UniProtKB"/>
</dbReference>
<dbReference type="GO" id="GO:0005654">
    <property type="term" value="C:nucleoplasm"/>
    <property type="evidence" value="ECO:0000314"/>
    <property type="project" value="HPA"/>
</dbReference>
<dbReference type="GO" id="GO:0005634">
    <property type="term" value="C:nucleus"/>
    <property type="evidence" value="ECO:0000314"/>
    <property type="project" value="UniProtKB"/>
</dbReference>
<dbReference type="GO" id="GO:0098794">
    <property type="term" value="C:postsynapse"/>
    <property type="evidence" value="ECO:0007669"/>
    <property type="project" value="GOC"/>
</dbReference>
<dbReference type="GO" id="GO:0003682">
    <property type="term" value="F:chromatin binding"/>
    <property type="evidence" value="ECO:0000318"/>
    <property type="project" value="GO_Central"/>
</dbReference>
<dbReference type="GO" id="GO:0003677">
    <property type="term" value="F:DNA binding"/>
    <property type="evidence" value="ECO:0000304"/>
    <property type="project" value="ProtInc"/>
</dbReference>
<dbReference type="GO" id="GO:0010385">
    <property type="term" value="F:double-stranded methylated DNA binding"/>
    <property type="evidence" value="ECO:0000315"/>
    <property type="project" value="MGI"/>
</dbReference>
<dbReference type="GO" id="GO:0140566">
    <property type="term" value="F:histone reader activity"/>
    <property type="evidence" value="ECO:0007669"/>
    <property type="project" value="Ensembl"/>
</dbReference>
<dbReference type="GO" id="GO:0008327">
    <property type="term" value="F:methyl-CpG binding"/>
    <property type="evidence" value="ECO:0000318"/>
    <property type="project" value="GO_Central"/>
</dbReference>
<dbReference type="GO" id="GO:0060090">
    <property type="term" value="F:molecular adaptor activity"/>
    <property type="evidence" value="ECO:0000269"/>
    <property type="project" value="DisProt"/>
</dbReference>
<dbReference type="GO" id="GO:0140693">
    <property type="term" value="F:molecular condensate scaffold activity"/>
    <property type="evidence" value="ECO:0000315"/>
    <property type="project" value="DisProt"/>
</dbReference>
<dbReference type="GO" id="GO:0003729">
    <property type="term" value="F:mRNA binding"/>
    <property type="evidence" value="ECO:0007669"/>
    <property type="project" value="Ensembl"/>
</dbReference>
<dbReference type="GO" id="GO:0003676">
    <property type="term" value="F:nucleic acid binding"/>
    <property type="evidence" value="ECO:0000269"/>
    <property type="project" value="DisProt"/>
</dbReference>
<dbReference type="GO" id="GO:1990841">
    <property type="term" value="F:promoter-specific chromatin binding"/>
    <property type="evidence" value="ECO:0007669"/>
    <property type="project" value="Ensembl"/>
</dbReference>
<dbReference type="GO" id="GO:0003723">
    <property type="term" value="F:RNA binding"/>
    <property type="evidence" value="ECO:0007005"/>
    <property type="project" value="UniProtKB"/>
</dbReference>
<dbReference type="GO" id="GO:0035197">
    <property type="term" value="F:siRNA binding"/>
    <property type="evidence" value="ECO:0007669"/>
    <property type="project" value="Ensembl"/>
</dbReference>
<dbReference type="GO" id="GO:0003714">
    <property type="term" value="F:transcription corepressor activity"/>
    <property type="evidence" value="ECO:0000314"/>
    <property type="project" value="ARUK-UCL"/>
</dbReference>
<dbReference type="GO" id="GO:0008344">
    <property type="term" value="P:adult locomotory behavior"/>
    <property type="evidence" value="ECO:0007669"/>
    <property type="project" value="Ensembl"/>
</dbReference>
<dbReference type="GO" id="GO:0001662">
    <property type="term" value="P:behavioral fear response"/>
    <property type="evidence" value="ECO:0007669"/>
    <property type="project" value="Ensembl"/>
</dbReference>
<dbReference type="GO" id="GO:0006576">
    <property type="term" value="P:biogenic amine metabolic process"/>
    <property type="evidence" value="ECO:0007669"/>
    <property type="project" value="Ensembl"/>
</dbReference>
<dbReference type="GO" id="GO:0032048">
    <property type="term" value="P:cardiolipin metabolic process"/>
    <property type="evidence" value="ECO:0007669"/>
    <property type="project" value="Ensembl"/>
</dbReference>
<dbReference type="GO" id="GO:0050432">
    <property type="term" value="P:catecholamine secretion"/>
    <property type="evidence" value="ECO:0007669"/>
    <property type="project" value="Ensembl"/>
</dbReference>
<dbReference type="GO" id="GO:0021549">
    <property type="term" value="P:cerebellum development"/>
    <property type="evidence" value="ECO:0007669"/>
    <property type="project" value="Ensembl"/>
</dbReference>
<dbReference type="GO" id="GO:0016358">
    <property type="term" value="P:dendrite development"/>
    <property type="evidence" value="ECO:0007669"/>
    <property type="project" value="Ensembl"/>
</dbReference>
<dbReference type="GO" id="GO:0060079">
    <property type="term" value="P:excitatory postsynaptic potential"/>
    <property type="evidence" value="ECO:0007669"/>
    <property type="project" value="Ensembl"/>
</dbReference>
<dbReference type="GO" id="GO:0010467">
    <property type="term" value="P:gene expression"/>
    <property type="evidence" value="ECO:0007669"/>
    <property type="project" value="Ensembl"/>
</dbReference>
<dbReference type="GO" id="GO:0071514">
    <property type="term" value="P:genomic imprinting"/>
    <property type="evidence" value="ECO:0000315"/>
    <property type="project" value="MGI"/>
</dbReference>
<dbReference type="GO" id="GO:0014009">
    <property type="term" value="P:glial cell proliferation"/>
    <property type="evidence" value="ECO:0007669"/>
    <property type="project" value="Ensembl"/>
</dbReference>
<dbReference type="GO" id="GO:0008211">
    <property type="term" value="P:glucocorticoid metabolic process"/>
    <property type="evidence" value="ECO:0007669"/>
    <property type="project" value="Ensembl"/>
</dbReference>
<dbReference type="GO" id="GO:0006541">
    <property type="term" value="P:glutamine metabolic process"/>
    <property type="evidence" value="ECO:0007669"/>
    <property type="project" value="Ensembl"/>
</dbReference>
<dbReference type="GO" id="GO:0031507">
    <property type="term" value="P:heterochromatin formation"/>
    <property type="evidence" value="ECO:0007669"/>
    <property type="project" value="Ensembl"/>
</dbReference>
<dbReference type="GO" id="GO:0006020">
    <property type="term" value="P:inositol metabolic process"/>
    <property type="evidence" value="ECO:0007669"/>
    <property type="project" value="Ensembl"/>
</dbReference>
<dbReference type="GO" id="GO:0007616">
    <property type="term" value="P:long-term memory"/>
    <property type="evidence" value="ECO:0007669"/>
    <property type="project" value="Ensembl"/>
</dbReference>
<dbReference type="GO" id="GO:0060291">
    <property type="term" value="P:long-term synaptic potentiation"/>
    <property type="evidence" value="ECO:0007669"/>
    <property type="project" value="Ensembl"/>
</dbReference>
<dbReference type="GO" id="GO:0016525">
    <property type="term" value="P:negative regulation of angiogenesis"/>
    <property type="evidence" value="ECO:0000315"/>
    <property type="project" value="BHF-UCL"/>
</dbReference>
<dbReference type="GO" id="GO:0043537">
    <property type="term" value="P:negative regulation of blood vessel endothelial cell migration"/>
    <property type="evidence" value="ECO:0000314"/>
    <property type="project" value="BHF-UCL"/>
</dbReference>
<dbReference type="GO" id="GO:0045892">
    <property type="term" value="P:negative regulation of DNA-templated transcription"/>
    <property type="evidence" value="ECO:0000314"/>
    <property type="project" value="UniProtKB"/>
</dbReference>
<dbReference type="GO" id="GO:0010629">
    <property type="term" value="P:negative regulation of gene expression"/>
    <property type="evidence" value="ECO:0000314"/>
    <property type="project" value="BHF-UCL"/>
</dbReference>
<dbReference type="GO" id="GO:0044027">
    <property type="term" value="P:negative regulation of gene expression via chromosomal CpG island methylation"/>
    <property type="evidence" value="ECO:0000314"/>
    <property type="project" value="BHF-UCL"/>
</dbReference>
<dbReference type="GO" id="GO:0043524">
    <property type="term" value="P:negative regulation of neuron apoptotic process"/>
    <property type="evidence" value="ECO:0007669"/>
    <property type="project" value="Ensembl"/>
</dbReference>
<dbReference type="GO" id="GO:0051151">
    <property type="term" value="P:negative regulation of smooth muscle cell differentiation"/>
    <property type="evidence" value="ECO:0007669"/>
    <property type="project" value="Ensembl"/>
</dbReference>
<dbReference type="GO" id="GO:0000122">
    <property type="term" value="P:negative regulation of transcription by RNA polymerase II"/>
    <property type="evidence" value="ECO:0000318"/>
    <property type="project" value="GO_Central"/>
</dbReference>
<dbReference type="GO" id="GO:0001976">
    <property type="term" value="P:nervous system process involved in regulation of systemic arterial blood pressure"/>
    <property type="evidence" value="ECO:0007669"/>
    <property type="project" value="Ensembl"/>
</dbReference>
<dbReference type="GO" id="GO:0042551">
    <property type="term" value="P:neuron maturation"/>
    <property type="evidence" value="ECO:0007669"/>
    <property type="project" value="Ensembl"/>
</dbReference>
<dbReference type="GO" id="GO:0007219">
    <property type="term" value="P:Notch signaling pathway"/>
    <property type="evidence" value="ECO:0007669"/>
    <property type="project" value="Ensembl"/>
</dbReference>
<dbReference type="GO" id="GO:0046470">
    <property type="term" value="P:phosphatidylcholine metabolic process"/>
    <property type="evidence" value="ECO:0007669"/>
    <property type="project" value="Ensembl"/>
</dbReference>
<dbReference type="GO" id="GO:0060252">
    <property type="term" value="P:positive regulation of glial cell proliferation"/>
    <property type="evidence" value="ECO:0007669"/>
    <property type="project" value="Ensembl"/>
</dbReference>
<dbReference type="GO" id="GO:0090063">
    <property type="term" value="P:positive regulation of microtubule nucleation"/>
    <property type="evidence" value="ECO:0000315"/>
    <property type="project" value="CAFA"/>
</dbReference>
<dbReference type="GO" id="GO:0045944">
    <property type="term" value="P:positive regulation of transcription by RNA polymerase II"/>
    <property type="evidence" value="ECO:0007669"/>
    <property type="project" value="Ensembl"/>
</dbReference>
<dbReference type="GO" id="GO:0009791">
    <property type="term" value="P:post-embryonic development"/>
    <property type="evidence" value="ECO:0007669"/>
    <property type="project" value="Ensembl"/>
</dbReference>
<dbReference type="GO" id="GO:0019230">
    <property type="term" value="P:proprioception"/>
    <property type="evidence" value="ECO:0007669"/>
    <property type="project" value="Ensembl"/>
</dbReference>
<dbReference type="GO" id="GO:0008104">
    <property type="term" value="P:protein localization"/>
    <property type="evidence" value="ECO:0007669"/>
    <property type="project" value="Ensembl"/>
</dbReference>
<dbReference type="GO" id="GO:0002087">
    <property type="term" value="P:regulation of respiratory gaseous exchange by nervous system process"/>
    <property type="evidence" value="ECO:0007669"/>
    <property type="project" value="Ensembl"/>
</dbReference>
<dbReference type="GO" id="GO:0007585">
    <property type="term" value="P:respiratory gaseous exchange by respiratory system"/>
    <property type="evidence" value="ECO:0007669"/>
    <property type="project" value="Ensembl"/>
</dbReference>
<dbReference type="GO" id="GO:0001666">
    <property type="term" value="P:response to hypoxia"/>
    <property type="evidence" value="ECO:0007669"/>
    <property type="project" value="Ensembl"/>
</dbReference>
<dbReference type="GO" id="GO:0051707">
    <property type="term" value="P:response to other organism"/>
    <property type="evidence" value="ECO:0007669"/>
    <property type="project" value="Ensembl"/>
</dbReference>
<dbReference type="GO" id="GO:0019233">
    <property type="term" value="P:sensory perception of pain"/>
    <property type="evidence" value="ECO:0007669"/>
    <property type="project" value="Ensembl"/>
</dbReference>
<dbReference type="GO" id="GO:0035176">
    <property type="term" value="P:social behavior"/>
    <property type="evidence" value="ECO:0007669"/>
    <property type="project" value="Ensembl"/>
</dbReference>
<dbReference type="GO" id="GO:0001964">
    <property type="term" value="P:startle response"/>
    <property type="evidence" value="ECO:0007669"/>
    <property type="project" value="Ensembl"/>
</dbReference>
<dbReference type="GO" id="GO:0007416">
    <property type="term" value="P:synapse assembly"/>
    <property type="evidence" value="ECO:0007669"/>
    <property type="project" value="Ensembl"/>
</dbReference>
<dbReference type="GO" id="GO:0099191">
    <property type="term" value="P:trans-synaptic signaling by BDNF"/>
    <property type="evidence" value="ECO:0007669"/>
    <property type="project" value="Ensembl"/>
</dbReference>
<dbReference type="GO" id="GO:0021591">
    <property type="term" value="P:ventricular system development"/>
    <property type="evidence" value="ECO:0007669"/>
    <property type="project" value="Ensembl"/>
</dbReference>
<dbReference type="GO" id="GO:0008542">
    <property type="term" value="P:visual learning"/>
    <property type="evidence" value="ECO:0007669"/>
    <property type="project" value="Ensembl"/>
</dbReference>
<dbReference type="CDD" id="cd01396">
    <property type="entry name" value="MeCP2_MBD"/>
    <property type="match status" value="1"/>
</dbReference>
<dbReference type="DisProt" id="DP00539"/>
<dbReference type="FunFam" id="3.30.890.10:FF:000004">
    <property type="entry name" value="Methyl-CpG-binding protein 2"/>
    <property type="match status" value="1"/>
</dbReference>
<dbReference type="Gene3D" id="3.30.890.10">
    <property type="entry name" value="Methyl-cpg-binding Protein 2, Chain A"/>
    <property type="match status" value="1"/>
</dbReference>
<dbReference type="IDEAL" id="IID00717"/>
<dbReference type="InterPro" id="IPR016177">
    <property type="entry name" value="DNA-bd_dom_sf"/>
</dbReference>
<dbReference type="InterPro" id="IPR017353">
    <property type="entry name" value="Me_CpG-bd_MeCP2"/>
</dbReference>
<dbReference type="InterPro" id="IPR045138">
    <property type="entry name" value="MeCP2/MBD4"/>
</dbReference>
<dbReference type="InterPro" id="IPR001739">
    <property type="entry name" value="Methyl_CpG_DNA-bd"/>
</dbReference>
<dbReference type="PANTHER" id="PTHR15074">
    <property type="entry name" value="METHYL-CPG-BINDING PROTEIN"/>
    <property type="match status" value="1"/>
</dbReference>
<dbReference type="PANTHER" id="PTHR15074:SF6">
    <property type="entry name" value="METHYL-CPG-BINDING PROTEIN 2"/>
    <property type="match status" value="1"/>
</dbReference>
<dbReference type="Pfam" id="PF01429">
    <property type="entry name" value="MBD"/>
    <property type="match status" value="1"/>
</dbReference>
<dbReference type="PIRSF" id="PIRSF038006">
    <property type="entry name" value="Methyl_CpG_bd_MeCP2"/>
    <property type="match status" value="1"/>
</dbReference>
<dbReference type="SMART" id="SM00391">
    <property type="entry name" value="MBD"/>
    <property type="match status" value="1"/>
</dbReference>
<dbReference type="SUPFAM" id="SSF54171">
    <property type="entry name" value="DNA-binding domain"/>
    <property type="match status" value="1"/>
</dbReference>
<dbReference type="PROSITE" id="PS50982">
    <property type="entry name" value="MBD"/>
    <property type="match status" value="1"/>
</dbReference>
<evidence type="ECO:0000250" key="1"/>
<evidence type="ECO:0000250" key="2">
    <source>
        <dbReference type="UniProtKB" id="Q00566"/>
    </source>
</evidence>
<evidence type="ECO:0000250" key="3">
    <source>
        <dbReference type="UniProtKB" id="Q9Z2D6"/>
    </source>
</evidence>
<evidence type="ECO:0000255" key="4">
    <source>
        <dbReference type="PROSITE-ProRule" id="PRU00338"/>
    </source>
</evidence>
<evidence type="ECO:0000256" key="5">
    <source>
        <dbReference type="SAM" id="MobiDB-lite"/>
    </source>
</evidence>
<evidence type="ECO:0000269" key="6">
    <source>
    </source>
</evidence>
<evidence type="ECO:0000269" key="7">
    <source>
    </source>
</evidence>
<evidence type="ECO:0000269" key="8">
    <source>
    </source>
</evidence>
<evidence type="ECO:0000269" key="9">
    <source>
    </source>
</evidence>
<evidence type="ECO:0000269" key="10">
    <source>
    </source>
</evidence>
<evidence type="ECO:0000269" key="11">
    <source>
    </source>
</evidence>
<evidence type="ECO:0000269" key="12">
    <source>
    </source>
</evidence>
<evidence type="ECO:0000269" key="13">
    <source>
    </source>
</evidence>
<evidence type="ECO:0000269" key="14">
    <source>
    </source>
</evidence>
<evidence type="ECO:0000269" key="15">
    <source>
    </source>
</evidence>
<evidence type="ECO:0000269" key="16">
    <source>
    </source>
</evidence>
<evidence type="ECO:0000269" key="17">
    <source>
    </source>
</evidence>
<evidence type="ECO:0000269" key="18">
    <source>
    </source>
</evidence>
<evidence type="ECO:0000269" key="19">
    <source>
    </source>
</evidence>
<evidence type="ECO:0000269" key="20">
    <source>
    </source>
</evidence>
<evidence type="ECO:0000269" key="21">
    <source>
    </source>
</evidence>
<evidence type="ECO:0000269" key="22">
    <source>
    </source>
</evidence>
<evidence type="ECO:0000269" key="23">
    <source>
    </source>
</evidence>
<evidence type="ECO:0000269" key="24">
    <source>
    </source>
</evidence>
<evidence type="ECO:0000269" key="25">
    <source>
    </source>
</evidence>
<evidence type="ECO:0000269" key="26">
    <source>
    </source>
</evidence>
<evidence type="ECO:0000269" key="27">
    <source>
    </source>
</evidence>
<evidence type="ECO:0000269" key="28">
    <source>
    </source>
</evidence>
<evidence type="ECO:0000269" key="29">
    <source>
    </source>
</evidence>
<evidence type="ECO:0000269" key="30">
    <source>
    </source>
</evidence>
<evidence type="ECO:0000269" key="31">
    <source>
    </source>
</evidence>
<evidence type="ECO:0000269" key="32">
    <source>
    </source>
</evidence>
<evidence type="ECO:0000269" key="33">
    <source>
    </source>
</evidence>
<evidence type="ECO:0000269" key="34">
    <source>
    </source>
</evidence>
<evidence type="ECO:0000269" key="35">
    <source>
    </source>
</evidence>
<evidence type="ECO:0000269" key="36">
    <source>
    </source>
</evidence>
<evidence type="ECO:0000269" key="37">
    <source>
    </source>
</evidence>
<evidence type="ECO:0000269" key="38">
    <source>
    </source>
</evidence>
<evidence type="ECO:0000269" key="39">
    <source>
    </source>
</evidence>
<evidence type="ECO:0000269" key="40">
    <source>
    </source>
</evidence>
<evidence type="ECO:0000269" key="41">
    <source>
    </source>
</evidence>
<evidence type="ECO:0000269" key="42">
    <source>
    </source>
</evidence>
<evidence type="ECO:0000269" key="43">
    <source>
    </source>
</evidence>
<evidence type="ECO:0000269" key="44">
    <source>
    </source>
</evidence>
<evidence type="ECO:0000269" key="45">
    <source>
    </source>
</evidence>
<evidence type="ECO:0000269" key="46">
    <source>
    </source>
</evidence>
<evidence type="ECO:0000269" key="47">
    <source>
    </source>
</evidence>
<evidence type="ECO:0000269" key="48">
    <source>
    </source>
</evidence>
<evidence type="ECO:0000269" key="49">
    <source>
    </source>
</evidence>
<evidence type="ECO:0000303" key="50">
    <source>
    </source>
</evidence>
<evidence type="ECO:0000303" key="51">
    <source>
    </source>
</evidence>
<evidence type="ECO:0000305" key="52"/>
<evidence type="ECO:0007744" key="53">
    <source>
    </source>
</evidence>
<evidence type="ECO:0007744" key="54">
    <source>
    </source>
</evidence>
<evidence type="ECO:0007744" key="55">
    <source>
    </source>
</evidence>
<evidence type="ECO:0007744" key="56">
    <source>
    </source>
</evidence>
<evidence type="ECO:0007744" key="57">
    <source>
    </source>
</evidence>
<evidence type="ECO:0007744" key="58">
    <source>
    </source>
</evidence>
<evidence type="ECO:0007744" key="59">
    <source>
    </source>
</evidence>
<evidence type="ECO:0007829" key="60">
    <source>
        <dbReference type="PDB" id="1QK9"/>
    </source>
</evidence>
<evidence type="ECO:0007829" key="61">
    <source>
        <dbReference type="PDB" id="6OGJ"/>
    </source>
</evidence>
<evidence type="ECO:0007829" key="62">
    <source>
        <dbReference type="PDB" id="6OGK"/>
    </source>
</evidence>
<evidence type="ECO:0007829" key="63">
    <source>
        <dbReference type="PDB" id="8AJR"/>
    </source>
</evidence>
<evidence type="ECO:0007829" key="64">
    <source>
        <dbReference type="PDB" id="8ALQ"/>
    </source>
</evidence>
<sequence>MVAGMLGLREEKSEDQDLQGLKDKPLKFKKVKKDKKEEKEGKHEPVQPSAHHSAEPAEAGKAETSEGSGSAPAVPEASASPKQRRSIIRDRGPMYDDPTLPEGWTRKLKQRKSGRSAGKYDVYLINPQGKAFRSKVELIAYFEKVGDTSLDPNDFDFTVTGRGSPSRREQKPPKKPKSPKAPGTGRGRGRPKGSGTTRPKAATSEGVQVKRVLEKSPGKLLVKMPFQTSPGGKAEGGGATTSTQVMVIKRPGRKRKAEADPQAIPKKRGRKPGSVVAAAAAEAKKKAVKESSIRSVQETVLPIKKRKTRETVSIEVKEVVKPLLVSTLGEKSGKGLKTCKSPGRKSKESSPKGRSSSASSPPKKEHHHHHHHSESPKAPVPLLPPLPPPPPEPESSEDPTSPPEPQDLSSSVCKEEKMPRGGSLESDGCPKEPAKTQPAVATAATAAEKYKHRGEGERKDIVSSSMPRPNREEPVDSRTPVTERVS</sequence>